<comment type="function">
    <text evidence="1 5">Plays an essential role in the localization and membrane stabilization of ion transporters and ion channels in several cell types, including cardiomyocytes, as well as in striated muscle cells. In skeletal muscle, required for proper localization of DMD and DCTN4 and for the formation and/or stability of a special subset of microtubules associated with costameres and neuromuscular junctions. In cardiomyocytes, required for coordinate assembly of Na/Ca exchanger, SLC8A1/NCX1, Na/K ATPases ATP1A1 and ATP1A2 and inositol 1,4,5-trisphosphate (InsP3) receptors at sarcoplasmic reticulum/sarcolemma sites. Required for expression and targeting of SPTBN1 in neonatal cardiomyocytes and for the regulation of neonatal cardiomyocyte contraction rate (PubMed:12571597). In the inner segment of rod photoreceptors, required for the coordinated expression of the Na/K ATPase, Na/Ca exchanger and beta-2-spectrin (SPTBN1) (By similarity). Plays a role in endocytosis and intracellular protein transport. Associates with phosphatidylinositol 3-phosphate (PI3P)-positive organelles and binds dynactin to promote long-range motility of cells. Recruits RABGAP1L to (PI3P)-positive early endosomes, where RABGAP1L inactivates RAB22A, and promotes polarized trafficking to the leading edge of the migrating cells. Part of the ANK2/RABGAP1L complex which is required for the polarized recycling of fibronectin receptor ITGA5 ITGB1 to the plasma membrane that enables continuous directional cell migration (By similarity).</text>
</comment>
<comment type="subunit">
    <text evidence="1 7 8 13 15">Interacts with RHBG and SPTBN1 (PubMed:15262991, PubMed:15611082). Colocalizes with Na/K ATPase, Na/Ca exchanger and SPTBN1 (PubMed:19007774). Directly interacts with DMD; this interaction is necessary for DMD localization at the sarcolemma. Interacts with DCTN4; this interaction is required for DCTN4 retention at costameres. Identified in complexes that contain VIM, EZR, AHNAK, BFSP1, BFSP2, ANK2, PLEC, PRX and spectrin (By similarity). Interacts (via death domain) with RABGAP1L (via Rab-GAP TBC domain) (PubMed:27718357).</text>
</comment>
<comment type="interaction">
    <interactant intactId="EBI-941975">
        <id>Q01484</id>
    </interactant>
    <interactant intactId="EBI-948905">
        <id>O00154</id>
        <label>ACOT7</label>
    </interactant>
    <organismsDiffer>false</organismsDiffer>
    <experiments>2</experiments>
</comment>
<comment type="interaction">
    <interactant intactId="EBI-941975">
        <id>Q01484</id>
    </interactant>
    <interactant intactId="EBI-1018651">
        <id>P11532-5</id>
        <label>DMD</label>
    </interactant>
    <organismsDiffer>false</organismsDiffer>
    <experiments>2</experiments>
</comment>
<comment type="interaction">
    <interactant intactId="EBI-941975">
        <id>Q01484</id>
    </interactant>
    <interactant intactId="EBI-356015">
        <id>Q14204</id>
        <label>DYNC1H1</label>
    </interactant>
    <organismsDiffer>false</organismsDiffer>
    <experiments>3</experiments>
</comment>
<comment type="interaction">
    <interactant intactId="EBI-941975">
        <id>Q01484</id>
    </interactant>
    <interactant intactId="EBI-2870749">
        <id>Q9NZN3</id>
        <label>EHD3</label>
    </interactant>
    <organismsDiffer>false</organismsDiffer>
    <experiments>2</experiments>
</comment>
<comment type="interaction">
    <interactant intactId="EBI-941975">
        <id>Q01484</id>
    </interactant>
    <interactant intactId="EBI-401755">
        <id>P62993</id>
        <label>GRB2</label>
    </interactant>
    <organismsDiffer>false</organismsDiffer>
    <experiments>2</experiments>
</comment>
<comment type="interaction">
    <interactant intactId="EBI-941975">
        <id>Q01484</id>
    </interactant>
    <interactant intactId="EBI-2866553">
        <id>Q14654</id>
        <label>KCNJ11</label>
    </interactant>
    <organismsDiffer>false</organismsDiffer>
    <experiments>6</experiments>
</comment>
<comment type="interaction">
    <interactant intactId="EBI-941975">
        <id>Q01484</id>
    </interactant>
    <interactant intactId="EBI-2371806">
        <id>Q9P2E9</id>
        <label>RRBP1</label>
    </interactant>
    <organismsDiffer>false</organismsDiffer>
    <experiments>2</experiments>
</comment>
<comment type="interaction">
    <interactant intactId="EBI-941994">
        <id>Q01484-2</id>
    </interactant>
    <interactant intactId="EBI-2682189">
        <id>P32418</id>
        <label>SLC8A1</label>
    </interactant>
    <organismsDiffer>false</organismsDiffer>
    <experiments>2</experiments>
</comment>
<comment type="subcellular location">
    <subcellularLocation>
        <location evidence="13">Cytoplasm</location>
        <location evidence="13">Cytoskeleton</location>
    </subcellularLocation>
    <subcellularLocation>
        <location evidence="13">Membrane</location>
    </subcellularLocation>
    <subcellularLocation>
        <location evidence="1">Cytoplasm</location>
        <location evidence="1">Myofibril</location>
        <location evidence="1">Sarcomere</location>
        <location evidence="1">M line</location>
    </subcellularLocation>
    <subcellularLocation>
        <location evidence="1">Apical cell membrane</location>
    </subcellularLocation>
    <subcellularLocation>
        <location evidence="13">Cell membrane</location>
    </subcellularLocation>
    <subcellularLocation>
        <location evidence="1">Postsynaptic cell membrane</location>
    </subcellularLocation>
    <subcellularLocation>
        <location evidence="1">Early endosome</location>
    </subcellularLocation>
    <subcellularLocation>
        <location evidence="1">Recycling endosome</location>
    </subcellularLocation>
    <subcellularLocation>
        <location evidence="1">Lysosome</location>
    </subcellularLocation>
    <subcellularLocation>
        <location evidence="1">Mitochondrion</location>
    </subcellularLocation>
    <subcellularLocation>
        <location evidence="1">Cytoplasm</location>
        <location evidence="1">Myofibril</location>
        <location evidence="1">Sarcomere</location>
        <location evidence="1">Z line</location>
    </subcellularLocation>
    <subcellularLocation>
        <location evidence="1">Cell membrane</location>
        <location evidence="1">Sarcolemma</location>
        <location evidence="1">T-tubule</location>
    </subcellularLocation>
    <text evidence="1 13">Expressed at the apical membrane of airway lung epithelial cells (By similarity). Localized to the plasma membrane of the inner segments of photoreceptors in retina. Colocalizes with SPTBN1 in a distinct intracellular compartment of neonatal cardiomyocytes (PubMed:19007774). In skeletal muscle, localizes to neuromuscular junctions (By similarity). Localizes with puncta at mitochondria ends. Colocalizes and cotransports on motile vesicles with RABGAP1L (By similarity).</text>
</comment>
<comment type="alternative products">
    <event type="alternative splicing"/>
    <isoform>
        <id>Q01484-4</id>
        <name>3</name>
        <sequence type="displayed"/>
    </isoform>
    <isoform>
        <id>Q01484-2</id>
        <name>2</name>
        <sequence type="described" ref="VSP_000268"/>
    </isoform>
    <isoform>
        <id>Q01484-5</id>
        <name>4</name>
        <sequence type="described" ref="VSP_037058 VSP_037059 VSP_000268"/>
    </isoform>
    <isoform>
        <id>Q01484-7</id>
        <name>5</name>
        <sequence type="described" ref="VSP_037057 VSP_000268 VSP_037060"/>
    </isoform>
</comment>
<comment type="tissue specificity">
    <text evidence="11 12 13">Present in plasma membrane of neurons as well as glial cells throughout the brain. Expressed in fetal brain and in temporal cortex of adult brain. Also expressed in the inner segments of rod photoreceptors in retina.</text>
</comment>
<comment type="domain">
    <text evidence="14">The tandem configuration of the two ZU5 and the UPA domains forms a structural supramodule termed ZZU. ZU5-1 mediates interaction with beta-spectrin, and the ZU5-1/UPA interface is required for ankyrin's function other than binding to spectrin.</text>
</comment>
<comment type="PTM">
    <text evidence="20">Phosphorylated at multiple sites by different protein kinases and each phosphorylation event regulates the protein's structure and function.</text>
</comment>
<comment type="disease" evidence="5 6 10">
    <disease id="DI-00682">
        <name>Long QT syndrome 4</name>
        <acronym>LQT4</acronym>
        <description>A heart disorder characterized by a prolonged QT interval on the ECG and polymorphic ventricular arrhythmias. They cause syncope and sudden death in response to exercise or emotional stress, and can present with a sentinel event of sudden cardiac death in infancy. Long QT syndrome type 4 shows many atypical features compared to classical long QT syndromes, including pronounced sinus bradycardia, polyphasic T waves and atrial fibrillation. Cardiac repolarization defects may be not as severe as in classical LQT syndromes and prolonged QT interval on EKG is not a consistent feature.</description>
        <dbReference type="MIM" id="600919"/>
    </disease>
    <text>The disease is caused by variants affecting the gene represented in this entry.</text>
</comment>
<comment type="sequence caution" evidence="20">
    <conflict type="frameshift">
        <sequence resource="EMBL-CDS" id="AAI25237"/>
    </conflict>
</comment>
<comment type="sequence caution" evidence="20">
    <conflict type="miscellaneous discrepancy">
        <sequence resource="EMBL-CDS" id="CAB42644"/>
    </conflict>
    <text>CDS lacks C-terminal region which is nevertheless present in the underlying cDNA.</text>
</comment>
<comment type="online information" name="Wikipedia">
    <link uri="https://en.wikipedia.org/wiki/Ankyrin"/>
    <text>Ankyrin entry</text>
</comment>
<feature type="chain" id="PRO_0000066885" description="Ankyrin-2">
    <location>
        <begin position="1"/>
        <end position="3957"/>
    </location>
</feature>
<feature type="repeat" description="ANK 1">
    <location>
        <begin position="30"/>
        <end position="62"/>
    </location>
</feature>
<feature type="repeat" description="ANK 2">
    <location>
        <begin position="63"/>
        <end position="92"/>
    </location>
</feature>
<feature type="repeat" description="ANK 3">
    <location>
        <begin position="96"/>
        <end position="125"/>
    </location>
</feature>
<feature type="repeat" description="ANK 4">
    <location>
        <begin position="129"/>
        <end position="158"/>
    </location>
</feature>
<feature type="repeat" description="ANK 5">
    <location>
        <begin position="162"/>
        <end position="191"/>
    </location>
</feature>
<feature type="repeat" description="ANK 6">
    <location>
        <begin position="193"/>
        <end position="220"/>
    </location>
</feature>
<feature type="repeat" description="ANK 7">
    <location>
        <begin position="232"/>
        <end position="261"/>
    </location>
</feature>
<feature type="repeat" description="ANK 8">
    <location>
        <begin position="265"/>
        <end position="294"/>
    </location>
</feature>
<feature type="repeat" description="ANK 9">
    <location>
        <begin position="298"/>
        <end position="327"/>
    </location>
</feature>
<feature type="repeat" description="ANK 10">
    <location>
        <begin position="331"/>
        <end position="360"/>
    </location>
</feature>
<feature type="repeat" description="ANK 11">
    <location>
        <begin position="364"/>
        <end position="393"/>
    </location>
</feature>
<feature type="repeat" description="ANK 12">
    <location>
        <begin position="397"/>
        <end position="426"/>
    </location>
</feature>
<feature type="repeat" description="ANK 13">
    <location>
        <begin position="430"/>
        <end position="459"/>
    </location>
</feature>
<feature type="repeat" description="ANK 14">
    <location>
        <begin position="463"/>
        <end position="492"/>
    </location>
</feature>
<feature type="repeat" description="ANK 15">
    <location>
        <begin position="496"/>
        <end position="525"/>
    </location>
</feature>
<feature type="repeat" description="ANK 16">
    <location>
        <begin position="529"/>
        <end position="558"/>
    </location>
</feature>
<feature type="repeat" description="ANK 17">
    <location>
        <begin position="562"/>
        <end position="591"/>
    </location>
</feature>
<feature type="repeat" description="ANK 18">
    <location>
        <begin position="595"/>
        <end position="624"/>
    </location>
</feature>
<feature type="repeat" description="ANK 19">
    <location>
        <begin position="628"/>
        <end position="657"/>
    </location>
</feature>
<feature type="repeat" description="ANK 20">
    <location>
        <begin position="661"/>
        <end position="690"/>
    </location>
</feature>
<feature type="repeat" description="ANK 21">
    <location>
        <begin position="694"/>
        <end position="723"/>
    </location>
</feature>
<feature type="repeat" description="ANK 22">
    <location>
        <begin position="727"/>
        <end position="756"/>
    </location>
</feature>
<feature type="repeat" description="ANK 23">
    <location>
        <begin position="760"/>
        <end position="789"/>
    </location>
</feature>
<feature type="repeat" description="ANK 24">
    <location>
        <begin position="793"/>
        <end position="822"/>
    </location>
</feature>
<feature type="domain" description="ZU5 1" evidence="3">
    <location>
        <begin position="968"/>
        <end position="1156"/>
    </location>
</feature>
<feature type="domain" description="ZU5 2" evidence="3">
    <location>
        <begin position="1158"/>
        <end position="1304"/>
    </location>
</feature>
<feature type="domain" description="Death 1" evidence="2">
    <location>
        <begin position="1450"/>
        <end position="1535"/>
    </location>
</feature>
<feature type="repeat" description="Repeat A">
    <location>
        <begin position="1806"/>
        <end position="1817"/>
    </location>
</feature>
<feature type="repeat" description="Repeat A">
    <location>
        <begin position="1818"/>
        <end position="1829"/>
    </location>
</feature>
<feature type="repeat" description="Repeat A">
    <location>
        <begin position="1830"/>
        <end position="1841"/>
    </location>
</feature>
<feature type="repeat" description="Repeat A">
    <location>
        <begin position="1842"/>
        <end position="1853"/>
    </location>
</feature>
<feature type="repeat" description="Repeat A">
    <location>
        <begin position="1854"/>
        <end position="1865"/>
    </location>
</feature>
<feature type="repeat" description="Repeat A">
    <location>
        <begin position="1866"/>
        <end position="1877"/>
    </location>
</feature>
<feature type="repeat" description="Repeat A">
    <location>
        <begin position="1878"/>
        <end position="1889"/>
    </location>
</feature>
<feature type="repeat" description="Repeat A; approximate">
    <location>
        <begin position="1890"/>
        <end position="1900"/>
    </location>
</feature>
<feature type="repeat" description="Repeat A">
    <location>
        <begin position="1901"/>
        <end position="1912"/>
    </location>
</feature>
<feature type="repeat" description="Repeat A">
    <location>
        <begin position="1913"/>
        <end position="1924"/>
    </location>
</feature>
<feature type="repeat" description="Repeat A; approximate">
    <location>
        <begin position="1925"/>
        <end position="1935"/>
    </location>
</feature>
<feature type="repeat" description="Repeat A">
    <location>
        <begin position="1936"/>
        <end position="1947"/>
    </location>
</feature>
<feature type="repeat" description="Repeat A">
    <location>
        <begin position="1948"/>
        <end position="1959"/>
    </location>
</feature>
<feature type="repeat" description="Repeat A">
    <location>
        <begin position="1960"/>
        <end position="1971"/>
    </location>
</feature>
<feature type="repeat" description="Repeat A">
    <location>
        <begin position="1972"/>
        <end position="1983"/>
    </location>
</feature>
<feature type="domain" description="Death 2" evidence="2">
    <location>
        <begin position="3569"/>
        <end position="3653"/>
    </location>
</feature>
<feature type="region of interest" description="Disordered" evidence="4">
    <location>
        <begin position="1"/>
        <end position="34"/>
    </location>
</feature>
<feature type="region of interest" description="Interaction with SPTBN1" evidence="7">
    <location>
        <begin position="966"/>
        <end position="1125"/>
    </location>
</feature>
<feature type="region of interest" description="UPA domain">
    <location>
        <begin position="1289"/>
        <end position="1423"/>
    </location>
</feature>
<feature type="region of interest" description="Disordered" evidence="4">
    <location>
        <begin position="1457"/>
        <end position="1486"/>
    </location>
</feature>
<feature type="region of interest" description="Disordered" evidence="4">
    <location>
        <begin position="1670"/>
        <end position="2137"/>
    </location>
</feature>
<feature type="region of interest" description="Repeat-rich region">
    <location>
        <begin position="1806"/>
        <end position="1983"/>
    </location>
</feature>
<feature type="region of interest" description="Disordered" evidence="4">
    <location>
        <begin position="2197"/>
        <end position="2411"/>
    </location>
</feature>
<feature type="region of interest" description="Disordered" evidence="4">
    <location>
        <begin position="2430"/>
        <end position="2484"/>
    </location>
</feature>
<feature type="region of interest" description="Disordered" evidence="4">
    <location>
        <begin position="2507"/>
        <end position="2586"/>
    </location>
</feature>
<feature type="region of interest" description="Disordered" evidence="4">
    <location>
        <begin position="2604"/>
        <end position="2852"/>
    </location>
</feature>
<feature type="region of interest" description="Disordered" evidence="4">
    <location>
        <begin position="2864"/>
        <end position="2904"/>
    </location>
</feature>
<feature type="region of interest" description="Disordered" evidence="4">
    <location>
        <begin position="2923"/>
        <end position="2951"/>
    </location>
</feature>
<feature type="region of interest" description="Disordered" evidence="4">
    <location>
        <begin position="2987"/>
        <end position="3016"/>
    </location>
</feature>
<feature type="region of interest" description="Disordered" evidence="4">
    <location>
        <begin position="3069"/>
        <end position="3099"/>
    </location>
</feature>
<feature type="region of interest" description="Disordered" evidence="4">
    <location>
        <begin position="3136"/>
        <end position="3462"/>
    </location>
</feature>
<feature type="region of interest" description="Disordered" evidence="4">
    <location>
        <begin position="3777"/>
        <end position="3858"/>
    </location>
</feature>
<feature type="compositionally biased region" description="Basic and acidic residues" evidence="4">
    <location>
        <begin position="1"/>
        <end position="14"/>
    </location>
</feature>
<feature type="compositionally biased region" description="Acidic residues" evidence="4">
    <location>
        <begin position="1461"/>
        <end position="1471"/>
    </location>
</feature>
<feature type="compositionally biased region" description="Basic and acidic residues" evidence="4">
    <location>
        <begin position="1674"/>
        <end position="1683"/>
    </location>
</feature>
<feature type="compositionally biased region" description="Basic and acidic residues" evidence="4">
    <location>
        <begin position="1711"/>
        <end position="1733"/>
    </location>
</feature>
<feature type="compositionally biased region" description="Basic and acidic residues" evidence="4">
    <location>
        <begin position="1766"/>
        <end position="1783"/>
    </location>
</feature>
<feature type="compositionally biased region" description="Basic and acidic residues" evidence="4">
    <location>
        <begin position="1886"/>
        <end position="1902"/>
    </location>
</feature>
<feature type="compositionally biased region" description="Basic and acidic residues" evidence="4">
    <location>
        <begin position="1921"/>
        <end position="1937"/>
    </location>
</feature>
<feature type="compositionally biased region" description="Basic and acidic residues" evidence="4">
    <location>
        <begin position="1980"/>
        <end position="1994"/>
    </location>
</feature>
<feature type="compositionally biased region" description="Basic and acidic residues" evidence="4">
    <location>
        <begin position="2003"/>
        <end position="2034"/>
    </location>
</feature>
<feature type="compositionally biased region" description="Basic and acidic residues" evidence="4">
    <location>
        <begin position="2075"/>
        <end position="2093"/>
    </location>
</feature>
<feature type="compositionally biased region" description="Basic and acidic residues" evidence="4">
    <location>
        <begin position="2102"/>
        <end position="2117"/>
    </location>
</feature>
<feature type="compositionally biased region" description="Basic and acidic residues" evidence="4">
    <location>
        <begin position="2128"/>
        <end position="2137"/>
    </location>
</feature>
<feature type="compositionally biased region" description="Polar residues" evidence="4">
    <location>
        <begin position="2240"/>
        <end position="2251"/>
    </location>
</feature>
<feature type="compositionally biased region" description="Basic and acidic residues" evidence="4">
    <location>
        <begin position="2252"/>
        <end position="2282"/>
    </location>
</feature>
<feature type="compositionally biased region" description="Polar residues" evidence="4">
    <location>
        <begin position="2355"/>
        <end position="2376"/>
    </location>
</feature>
<feature type="compositionally biased region" description="Polar residues" evidence="4">
    <location>
        <begin position="2523"/>
        <end position="2545"/>
    </location>
</feature>
<feature type="compositionally biased region" description="Basic and acidic residues" evidence="4">
    <location>
        <begin position="2576"/>
        <end position="2586"/>
    </location>
</feature>
<feature type="compositionally biased region" description="Basic and acidic residues" evidence="4">
    <location>
        <begin position="2604"/>
        <end position="2619"/>
    </location>
</feature>
<feature type="compositionally biased region" description="Low complexity" evidence="4">
    <location>
        <begin position="2696"/>
        <end position="2705"/>
    </location>
</feature>
<feature type="compositionally biased region" description="Basic and acidic residues" evidence="4">
    <location>
        <begin position="2729"/>
        <end position="2776"/>
    </location>
</feature>
<feature type="compositionally biased region" description="Low complexity" evidence="4">
    <location>
        <begin position="2781"/>
        <end position="2791"/>
    </location>
</feature>
<feature type="compositionally biased region" description="Polar residues" evidence="4">
    <location>
        <begin position="2892"/>
        <end position="2903"/>
    </location>
</feature>
<feature type="compositionally biased region" description="Polar residues" evidence="4">
    <location>
        <begin position="2998"/>
        <end position="3016"/>
    </location>
</feature>
<feature type="compositionally biased region" description="Low complexity" evidence="4">
    <location>
        <begin position="3078"/>
        <end position="3087"/>
    </location>
</feature>
<feature type="compositionally biased region" description="Polar residues" evidence="4">
    <location>
        <begin position="3090"/>
        <end position="3099"/>
    </location>
</feature>
<feature type="compositionally biased region" description="Basic and acidic residues" evidence="4">
    <location>
        <begin position="3137"/>
        <end position="3149"/>
    </location>
</feature>
<feature type="compositionally biased region" description="Low complexity" evidence="4">
    <location>
        <begin position="3157"/>
        <end position="3169"/>
    </location>
</feature>
<feature type="compositionally biased region" description="Acidic residues" evidence="4">
    <location>
        <begin position="3175"/>
        <end position="3194"/>
    </location>
</feature>
<feature type="compositionally biased region" description="Polar residues" evidence="4">
    <location>
        <begin position="3198"/>
        <end position="3212"/>
    </location>
</feature>
<feature type="compositionally biased region" description="Polar residues" evidence="4">
    <location>
        <begin position="3256"/>
        <end position="3265"/>
    </location>
</feature>
<feature type="compositionally biased region" description="Basic and acidic residues" evidence="4">
    <location>
        <begin position="3335"/>
        <end position="3344"/>
    </location>
</feature>
<feature type="compositionally biased region" description="Polar residues" evidence="4">
    <location>
        <begin position="3357"/>
        <end position="3374"/>
    </location>
</feature>
<feature type="compositionally biased region" description="Basic and acidic residues" evidence="4">
    <location>
        <begin position="3409"/>
        <end position="3423"/>
    </location>
</feature>
<feature type="compositionally biased region" description="Low complexity" evidence="4">
    <location>
        <begin position="3446"/>
        <end position="3460"/>
    </location>
</feature>
<feature type="compositionally biased region" description="Basic and acidic residues" evidence="4">
    <location>
        <begin position="3832"/>
        <end position="3841"/>
    </location>
</feature>
<feature type="modified residue" description="Phosphoserine" evidence="1">
    <location>
        <position position="31"/>
    </location>
</feature>
<feature type="modified residue" description="Phosphoserine" evidence="1">
    <location>
        <position position="34"/>
    </location>
</feature>
<feature type="modified residue" description="Phosphotyrosine" evidence="1">
    <location>
        <position position="378"/>
    </location>
</feature>
<feature type="modified residue" description="Phosphotyrosine" evidence="1">
    <location>
        <position position="531"/>
    </location>
</feature>
<feature type="modified residue" description="Phosphoserine" evidence="21">
    <location>
        <position position="846"/>
    </location>
</feature>
<feature type="modified residue" description="Phosphothreonine" evidence="1">
    <location>
        <position position="853"/>
    </location>
</feature>
<feature type="modified residue" description="Phosphoserine" evidence="1">
    <location>
        <position position="874"/>
    </location>
</feature>
<feature type="modified residue" description="Phosphotyrosine" evidence="1">
    <location>
        <position position="1382"/>
    </location>
</feature>
<feature type="modified residue" description="Phosphoserine" evidence="1">
    <location>
        <position position="1459"/>
    </location>
</feature>
<feature type="modified residue" description="Phosphoserine" evidence="1">
    <location>
        <position position="1461"/>
    </location>
</feature>
<feature type="modified residue" description="Phosphoserine" evidence="1">
    <location>
        <position position="1473"/>
    </location>
</feature>
<feature type="modified residue" description="Phosphoserine" evidence="1">
    <location>
        <position position="1500"/>
    </location>
</feature>
<feature type="modified residue" description="Phosphoserine" evidence="1">
    <location>
        <position position="1596"/>
    </location>
</feature>
<feature type="modified residue" description="Phosphoserine" evidence="1">
    <location>
        <position position="1732"/>
    </location>
</feature>
<feature type="modified residue" description="Phosphoserine" evidence="1">
    <location>
        <position position="1733"/>
    </location>
</feature>
<feature type="modified residue" description="Phosphoserine" evidence="1">
    <location>
        <position position="1736"/>
    </location>
</feature>
<feature type="modified residue" description="Phosphoserine" evidence="1">
    <location>
        <position position="1855"/>
    </location>
</feature>
<feature type="modified residue" description="Phosphoserine" evidence="1">
    <location>
        <position position="1858"/>
    </location>
</feature>
<feature type="modified residue" description="Phosphoserine" evidence="1">
    <location>
        <position position="1929"/>
    </location>
</feature>
<feature type="modified residue" description="Phosphoserine" evidence="1">
    <location>
        <position position="2127"/>
    </location>
</feature>
<feature type="modified residue" description="Phosphothreonine" evidence="1">
    <location>
        <position position="2239"/>
    </location>
</feature>
<feature type="modified residue" description="Phosphoserine" evidence="1">
    <location>
        <position position="2243"/>
    </location>
</feature>
<feature type="modified residue" description="Phosphothreonine" evidence="1">
    <location>
        <position position="2269"/>
    </location>
</feature>
<feature type="modified residue" description="Phosphoserine" evidence="1">
    <location>
        <position position="2275"/>
    </location>
</feature>
<feature type="modified residue" description="Phosphoserine" evidence="1">
    <location>
        <position position="2405"/>
    </location>
</feature>
<feature type="modified residue" description="Phosphoserine" evidence="1">
    <location>
        <position position="2440"/>
    </location>
</feature>
<feature type="modified residue" description="Phosphoserine" evidence="1">
    <location>
        <position position="2454"/>
    </location>
</feature>
<feature type="modified residue" description="Phosphoserine" evidence="1">
    <location>
        <position position="2516"/>
    </location>
</feature>
<feature type="modified residue" description="Phosphoserine" evidence="1">
    <location>
        <position position="2521"/>
    </location>
</feature>
<feature type="modified residue" description="Phosphothreonine" evidence="1">
    <location>
        <position position="2583"/>
    </location>
</feature>
<feature type="modified residue" description="Phosphoserine" evidence="1">
    <location>
        <position position="2679"/>
    </location>
</feature>
<feature type="modified residue" description="Phosphoserine" evidence="1">
    <location>
        <position position="2701"/>
    </location>
</feature>
<feature type="modified residue" description="Phosphoserine" evidence="1">
    <location>
        <position position="2781"/>
    </location>
</feature>
<feature type="modified residue" description="Phosphoserine" evidence="1">
    <location>
        <position position="2795"/>
    </location>
</feature>
<feature type="modified residue" description="Phosphoserine" evidence="1">
    <location>
        <position position="2956"/>
    </location>
</feature>
<feature type="modified residue" description="Phosphoserine" evidence="1">
    <location>
        <position position="3075"/>
    </location>
</feature>
<feature type="modified residue" description="Phosphothreonine" evidence="1">
    <location>
        <position position="3078"/>
    </location>
</feature>
<feature type="modified residue" description="Phosphoserine" evidence="1">
    <location>
        <position position="3273"/>
    </location>
</feature>
<feature type="modified residue" description="Phosphoserine" evidence="1">
    <location>
        <position position="3276"/>
    </location>
</feature>
<feature type="modified residue" description="Phosphoserine" evidence="1">
    <location>
        <position position="3277"/>
    </location>
</feature>
<feature type="modified residue" description="Phosphoserine" evidence="1">
    <location>
        <position position="3390"/>
    </location>
</feature>
<feature type="modified residue" description="Phosphoserine" evidence="1">
    <location>
        <position position="3409"/>
    </location>
</feature>
<feature type="modified residue" description="Phosphoserine" evidence="1">
    <location>
        <position position="3474"/>
    </location>
</feature>
<feature type="modified residue" description="Phosphoserine" evidence="1">
    <location>
        <position position="3735"/>
    </location>
</feature>
<feature type="modified residue" description="Phosphothreonine" evidence="1">
    <location>
        <position position="3776"/>
    </location>
</feature>
<feature type="modified residue" description="Phosphothreonine" evidence="1">
    <location>
        <position position="3797"/>
    </location>
</feature>
<feature type="modified residue" description="Phosphothreonine" evidence="1">
    <location>
        <position position="3803"/>
    </location>
</feature>
<feature type="modified residue" description="Phosphothreonine" evidence="1">
    <location>
        <position position="3814"/>
    </location>
</feature>
<feature type="modified residue" description="Phosphoserine" evidence="1">
    <location>
        <position position="3823"/>
    </location>
</feature>
<feature type="modified residue" description="Phosphoserine" evidence="1">
    <location>
        <position position="3909"/>
    </location>
</feature>
<feature type="splice variant" id="VSP_037057" description="In isoform 5." evidence="16">
    <location>
        <begin position="1"/>
        <end position="1348"/>
    </location>
</feature>
<feature type="splice variant" id="VSP_037058" description="In isoform 4." evidence="17">
    <original>MMNEDAAQKSDSGEKFNGSSQRRKRPK</original>
    <variation>MTTMLQ</variation>
    <location>
        <begin position="1"/>
        <end position="27"/>
    </location>
</feature>
<feature type="splice variant" id="VSP_037059" description="In isoform 4." evidence="17">
    <original>G</original>
    <variation>GRASPCLERDNSS</variation>
    <location>
        <position position="967"/>
    </location>
</feature>
<feature type="splice variant" id="VSP_000268" description="In isoform 2, isoform 4 and isoform 5." evidence="16 17 18">
    <location>
        <begin position="1477"/>
        <end position="3561"/>
    </location>
</feature>
<feature type="splice variant" id="VSP_037060" description="In isoform 5." evidence="16">
    <original>K</original>
    <variation>KELTEELGELEASSDEEAMVTTRVVRRRVIIQ</variation>
    <location>
        <position position="3870"/>
    </location>
</feature>
<feature type="sequence variant" id="VAR_035606" description="In a breast cancer sample; somatic mutation." evidence="9">
    <original>G</original>
    <variation>E</variation>
    <location>
        <position position="685"/>
    </location>
</feature>
<feature type="sequence variant" id="VAR_055504" description="In dbSNP:rs29372.">
    <original>N</original>
    <variation>S</variation>
    <location>
        <position position="687"/>
    </location>
</feature>
<feature type="sequence variant" id="VAR_035607" description="In a colorectal cancer sample; somatic mutation." evidence="9">
    <original>G</original>
    <variation>R</variation>
    <location>
        <position position="1267"/>
    </location>
</feature>
<feature type="sequence variant" id="VAR_022934" description="In LQT4; uncertain significance; abnormal calcium ion homeostasis, when tested in a heterologous system; dbSNP:rs72544141." evidence="5 6 10">
    <original>E</original>
    <variation>G</variation>
    <location>
        <position position="1458"/>
    </location>
</feature>
<feature type="sequence variant" id="VAR_081135" evidence="10">
    <original>V</original>
    <variation>D</variation>
    <location>
        <position position="1555"/>
    </location>
</feature>
<feature type="sequence variant" id="VAR_055505" description="In dbSNP:rs28377576.">
    <original>V</original>
    <variation>A</variation>
    <location>
        <position position="2369"/>
    </location>
</feature>
<feature type="sequence variant" id="VAR_035608" description="In a colorectal cancer sample; somatic mutation; dbSNP:rs2154053205." evidence="9">
    <original>T</original>
    <variation>K</variation>
    <location>
        <position position="3653"/>
    </location>
</feature>
<feature type="sequence variant" id="VAR_022935" description="In LQT4; loss of function; dbSNP:rs35530544." evidence="6 10">
    <original>L</original>
    <variation>I</variation>
    <location>
        <position position="3740"/>
    </location>
</feature>
<feature type="sequence variant" id="VAR_022936" description="In LQT4; loss of function; dbSNP:rs121912705." evidence="6 10">
    <original>T</original>
    <variation>N</variation>
    <location>
        <position position="3744"/>
    </location>
</feature>
<feature type="sequence variant" id="VAR_022937" description="In LQT4; loss of function; dbSNP:rs121912706." evidence="6 10">
    <original>R</original>
    <variation>W</variation>
    <location>
        <position position="3906"/>
    </location>
</feature>
<feature type="sequence variant" id="VAR_022938" description="In LQT4; loss of function; dbSNP:rs45454496." evidence="6 10">
    <original>E</original>
    <variation>K</variation>
    <location>
        <position position="3931"/>
    </location>
</feature>
<feature type="mutagenesis site" description="Prevents binding to SPTBN1." evidence="7">
    <original>DAR</original>
    <variation>AAA</variation>
    <location>
        <begin position="975"/>
        <end position="977"/>
    </location>
</feature>
<feature type="mutagenesis site" description="Prevents binding to SPTBN1." evidence="7">
    <original>A</original>
    <variation>P</variation>
    <location>
        <position position="1000"/>
    </location>
</feature>
<feature type="mutagenesis site" description="Weak binding to SPTBN1." evidence="7">
    <original>ENGD</original>
    <variation>AAGA</variation>
    <location>
        <begin position="1100"/>
        <end position="1103"/>
    </location>
</feature>
<feature type="sequence conflict" description="In Ref. 4; CAD97827." evidence="20" ref="4">
    <original>V</original>
    <variation>I</variation>
    <location>
        <position position="220"/>
    </location>
</feature>
<feature type="sequence conflict" description="In Ref. 7; AAA62828." evidence="20" ref="7">
    <original>GQ</original>
    <variation>PE</variation>
    <location>
        <begin position="475"/>
        <end position="476"/>
    </location>
</feature>
<feature type="sequence conflict" description="In Ref. 3; CAB42644." evidence="20" ref="3">
    <original>A</original>
    <variation>R</variation>
    <location>
        <position position="2787"/>
    </location>
</feature>
<feature type="sequence conflict" description="In Ref. 3; CAB42644." evidence="20" ref="3">
    <original>Q</original>
    <variation>L</variation>
    <location>
        <position position="2999"/>
    </location>
</feature>
<feature type="sequence conflict" description="In Ref. 5; AC093879." evidence="20" ref="5">
    <original>EE</original>
    <variation>RY</variation>
    <location>
        <begin position="3140"/>
        <end position="3141"/>
    </location>
</feature>
<feature type="sequence conflict" description="In Ref. 3; CAB42644." evidence="20" ref="3">
    <original>D</original>
    <variation>S</variation>
    <location>
        <position position="3185"/>
    </location>
</feature>
<feature type="sequence conflict" description="In Ref. 4; CAD97827." evidence="20" ref="4">
    <original>V</original>
    <variation>A</variation>
    <location>
        <position position="3699"/>
    </location>
</feature>
<feature type="sequence conflict" description="In Ref. 1; CAA40279 and 3; CAB42644." evidence="20" ref="1 3">
    <original>A</original>
    <variation>S</variation>
    <location>
        <position position="3737"/>
    </location>
</feature>
<feature type="sequence conflict" description="In Ref. 5; AC093879." evidence="20" ref="5">
    <original>NN</original>
    <variation>SM</variation>
    <location>
        <begin position="3955"/>
        <end position="3956"/>
    </location>
</feature>
<feature type="helix" evidence="24">
    <location>
        <begin position="30"/>
        <end position="41"/>
    </location>
</feature>
<feature type="helix" evidence="24">
    <location>
        <begin position="44"/>
        <end position="52"/>
    </location>
</feature>
<feature type="helix" evidence="24">
    <location>
        <begin position="67"/>
        <end position="74"/>
    </location>
</feature>
<feature type="helix" evidence="24">
    <location>
        <begin position="77"/>
        <end position="86"/>
    </location>
</feature>
<feature type="helix" evidence="24">
    <location>
        <begin position="100"/>
        <end position="106"/>
    </location>
</feature>
<feature type="helix" evidence="24">
    <location>
        <begin position="110"/>
        <end position="118"/>
    </location>
</feature>
<feature type="helix" evidence="24">
    <location>
        <begin position="133"/>
        <end position="139"/>
    </location>
</feature>
<feature type="helix" evidence="24">
    <location>
        <begin position="143"/>
        <end position="150"/>
    </location>
</feature>
<feature type="turn" evidence="24">
    <location>
        <begin position="151"/>
        <end position="153"/>
    </location>
</feature>
<feature type="helix" evidence="24">
    <location>
        <begin position="166"/>
        <end position="172"/>
    </location>
</feature>
<feature type="helix" evidence="24">
    <location>
        <begin position="176"/>
        <end position="183"/>
    </location>
</feature>
<feature type="turn" evidence="24">
    <location>
        <begin position="184"/>
        <end position="186"/>
    </location>
</feature>
<feature type="helix" evidence="24">
    <location>
        <begin position="195"/>
        <end position="202"/>
    </location>
</feature>
<feature type="helix" evidence="24">
    <location>
        <begin position="205"/>
        <end position="211"/>
    </location>
</feature>
<feature type="helix" evidence="24">
    <location>
        <begin position="212"/>
        <end position="214"/>
    </location>
</feature>
<feature type="turn" evidence="25">
    <location>
        <begin position="221"/>
        <end position="223"/>
    </location>
</feature>
<feature type="helix" evidence="24">
    <location>
        <begin position="225"/>
        <end position="227"/>
    </location>
</feature>
<feature type="helix" evidence="24">
    <location>
        <begin position="236"/>
        <end position="243"/>
    </location>
</feature>
<feature type="helix" evidence="24">
    <location>
        <begin position="246"/>
        <end position="254"/>
    </location>
</feature>
<feature type="helix" evidence="24">
    <location>
        <begin position="264"/>
        <end position="266"/>
    </location>
</feature>
<feature type="helix" evidence="26">
    <location>
        <begin position="269"/>
        <end position="275"/>
    </location>
</feature>
<feature type="helix" evidence="26">
    <location>
        <begin position="279"/>
        <end position="287"/>
    </location>
</feature>
<feature type="helix" evidence="26">
    <location>
        <begin position="302"/>
        <end position="308"/>
    </location>
</feature>
<feature type="helix" evidence="26">
    <location>
        <begin position="312"/>
        <end position="320"/>
    </location>
</feature>
<feature type="helix" evidence="26">
    <location>
        <begin position="335"/>
        <end position="341"/>
    </location>
</feature>
<feature type="helix" evidence="26">
    <location>
        <begin position="345"/>
        <end position="353"/>
    </location>
</feature>
<feature type="helix" evidence="26">
    <location>
        <begin position="368"/>
        <end position="375"/>
    </location>
</feature>
<feature type="helix" evidence="26">
    <location>
        <begin position="378"/>
        <end position="386"/>
    </location>
</feature>
<feature type="helix" evidence="26">
    <location>
        <begin position="396"/>
        <end position="398"/>
    </location>
</feature>
<feature type="helix" evidence="26">
    <location>
        <begin position="401"/>
        <end position="407"/>
    </location>
</feature>
<feature type="helix" evidence="26">
    <location>
        <begin position="411"/>
        <end position="419"/>
    </location>
</feature>
<feature type="helix" evidence="27">
    <location>
        <begin position="434"/>
        <end position="441"/>
    </location>
</feature>
<feature type="helix" evidence="27">
    <location>
        <begin position="444"/>
        <end position="452"/>
    </location>
</feature>
<feature type="helix" evidence="27">
    <location>
        <begin position="467"/>
        <end position="473"/>
    </location>
</feature>
<feature type="helix" evidence="27">
    <location>
        <begin position="477"/>
        <end position="485"/>
    </location>
</feature>
<feature type="helix" evidence="27">
    <location>
        <begin position="495"/>
        <end position="497"/>
    </location>
</feature>
<feature type="helix" evidence="27">
    <location>
        <begin position="500"/>
        <end position="506"/>
    </location>
</feature>
<feature type="helix" evidence="27">
    <location>
        <begin position="510"/>
        <end position="518"/>
    </location>
</feature>
<feature type="helix" evidence="27">
    <location>
        <begin position="533"/>
        <end position="540"/>
    </location>
</feature>
<feature type="helix" evidence="27">
    <location>
        <begin position="543"/>
        <end position="551"/>
    </location>
</feature>
<feature type="helix" evidence="27">
    <location>
        <begin position="566"/>
        <end position="573"/>
    </location>
</feature>
<feature type="helix" evidence="27">
    <location>
        <begin position="576"/>
        <end position="584"/>
    </location>
</feature>
<feature type="helix" evidence="27">
    <location>
        <begin position="599"/>
        <end position="605"/>
    </location>
</feature>
<feature type="helix" evidence="27">
    <location>
        <begin position="609"/>
        <end position="617"/>
    </location>
</feature>
<feature type="helix" evidence="27">
    <location>
        <begin position="632"/>
        <end position="639"/>
    </location>
</feature>
<feature type="helix" evidence="27">
    <location>
        <begin position="642"/>
        <end position="650"/>
    </location>
</feature>
<feature type="helix" evidence="27">
    <location>
        <begin position="665"/>
        <end position="672"/>
    </location>
</feature>
<feature type="helix" evidence="27">
    <location>
        <begin position="675"/>
        <end position="683"/>
    </location>
</feature>
<feature type="strand" evidence="23">
    <location>
        <begin position="693"/>
        <end position="695"/>
    </location>
</feature>
<feature type="helix" evidence="27">
    <location>
        <begin position="698"/>
        <end position="705"/>
    </location>
</feature>
<feature type="helix" evidence="27">
    <location>
        <begin position="708"/>
        <end position="716"/>
    </location>
</feature>
<feature type="helix" evidence="27">
    <location>
        <begin position="731"/>
        <end position="738"/>
    </location>
</feature>
<feature type="helix" evidence="27">
    <location>
        <begin position="741"/>
        <end position="749"/>
    </location>
</feature>
<feature type="strand" evidence="23">
    <location>
        <begin position="759"/>
        <end position="761"/>
    </location>
</feature>
<feature type="helix" evidence="27">
    <location>
        <begin position="764"/>
        <end position="770"/>
    </location>
</feature>
<feature type="helix" evidence="27">
    <location>
        <begin position="774"/>
        <end position="782"/>
    </location>
</feature>
<feature type="helix" evidence="27">
    <location>
        <begin position="797"/>
        <end position="803"/>
    </location>
</feature>
<feature type="helix" evidence="27">
    <location>
        <begin position="807"/>
        <end position="814"/>
    </location>
</feature>
<feature type="turn" evidence="27">
    <location>
        <begin position="831"/>
        <end position="833"/>
    </location>
</feature>
<feature type="strand" evidence="30">
    <location>
        <begin position="960"/>
        <end position="962"/>
    </location>
</feature>
<feature type="strand" evidence="22">
    <location>
        <begin position="969"/>
        <end position="974"/>
    </location>
</feature>
<feature type="strand" evidence="22">
    <location>
        <begin position="979"/>
        <end position="982"/>
    </location>
</feature>
<feature type="strand" evidence="22">
    <location>
        <begin position="984"/>
        <end position="986"/>
    </location>
</feature>
<feature type="strand" evidence="22">
    <location>
        <begin position="990"/>
        <end position="993"/>
    </location>
</feature>
<feature type="strand" evidence="30">
    <location>
        <begin position="998"/>
        <end position="1000"/>
    </location>
</feature>
<feature type="strand" evidence="22">
    <location>
        <begin position="1002"/>
        <end position="1009"/>
    </location>
</feature>
<feature type="strand" evidence="22">
    <location>
        <begin position="1025"/>
        <end position="1028"/>
    </location>
</feature>
<feature type="strand" evidence="22">
    <location>
        <begin position="1031"/>
        <end position="1035"/>
    </location>
</feature>
<feature type="strand" evidence="22">
    <location>
        <begin position="1039"/>
        <end position="1042"/>
    </location>
</feature>
<feature type="strand" evidence="22">
    <location>
        <begin position="1076"/>
        <end position="1082"/>
    </location>
</feature>
<feature type="turn" evidence="22">
    <location>
        <begin position="1088"/>
        <end position="1091"/>
    </location>
</feature>
<feature type="strand" evidence="22">
    <location>
        <begin position="1092"/>
        <end position="1103"/>
    </location>
</feature>
<feature type="helix" evidence="30">
    <location>
        <begin position="1114"/>
        <end position="1121"/>
    </location>
</feature>
<feature type="helix" evidence="22">
    <location>
        <begin position="1131"/>
        <end position="1137"/>
    </location>
</feature>
<feature type="strand" evidence="22">
    <location>
        <begin position="1139"/>
        <end position="1146"/>
    </location>
</feature>
<feature type="strand" evidence="22">
    <location>
        <begin position="1149"/>
        <end position="1157"/>
    </location>
</feature>
<feature type="strand" evidence="22">
    <location>
        <begin position="1159"/>
        <end position="1165"/>
    </location>
</feature>
<feature type="strand" evidence="22">
    <location>
        <begin position="1168"/>
        <end position="1172"/>
    </location>
</feature>
<feature type="strand" evidence="22">
    <location>
        <begin position="1174"/>
        <end position="1176"/>
    </location>
</feature>
<feature type="strand" evidence="22">
    <location>
        <begin position="1180"/>
        <end position="1183"/>
    </location>
</feature>
<feature type="strand" evidence="22">
    <location>
        <begin position="1192"/>
        <end position="1199"/>
    </location>
</feature>
<feature type="helix" evidence="22">
    <location>
        <begin position="1203"/>
        <end position="1210"/>
    </location>
</feature>
<feature type="strand" evidence="22">
    <location>
        <begin position="1213"/>
        <end position="1216"/>
    </location>
</feature>
<feature type="strand" evidence="22">
    <location>
        <begin position="1219"/>
        <end position="1226"/>
    </location>
</feature>
<feature type="strand" evidence="22">
    <location>
        <begin position="1228"/>
        <end position="1238"/>
    </location>
</feature>
<feature type="strand" evidence="22">
    <location>
        <begin position="1258"/>
        <end position="1263"/>
    </location>
</feature>
<feature type="helix" evidence="22">
    <location>
        <begin position="1277"/>
        <end position="1279"/>
    </location>
</feature>
<feature type="strand" evidence="22">
    <location>
        <begin position="1283"/>
        <end position="1285"/>
    </location>
</feature>
<feature type="strand" evidence="22">
    <location>
        <begin position="1288"/>
        <end position="1295"/>
    </location>
</feature>
<feature type="strand" evidence="22">
    <location>
        <begin position="1298"/>
        <end position="1305"/>
    </location>
</feature>
<feature type="helix" evidence="22">
    <location>
        <begin position="1307"/>
        <end position="1309"/>
    </location>
</feature>
<feature type="helix" evidence="22">
    <location>
        <begin position="1310"/>
        <end position="1321"/>
    </location>
</feature>
<feature type="strand" evidence="22">
    <location>
        <begin position="1325"/>
        <end position="1335"/>
    </location>
</feature>
<feature type="strand" evidence="22">
    <location>
        <begin position="1338"/>
        <end position="1349"/>
    </location>
</feature>
<feature type="helix" evidence="22">
    <location>
        <begin position="1357"/>
        <end position="1359"/>
    </location>
</feature>
<feature type="strand" evidence="22">
    <location>
        <begin position="1365"/>
        <end position="1369"/>
    </location>
</feature>
<feature type="strand" evidence="22">
    <location>
        <begin position="1373"/>
        <end position="1376"/>
    </location>
</feature>
<feature type="strand" evidence="22">
    <location>
        <begin position="1380"/>
        <end position="1391"/>
    </location>
</feature>
<feature type="strand" evidence="22">
    <location>
        <begin position="1399"/>
        <end position="1402"/>
    </location>
</feature>
<feature type="strand" evidence="22">
    <location>
        <begin position="1410"/>
        <end position="1418"/>
    </location>
</feature>
<feature type="strand" evidence="30">
    <location>
        <begin position="1420"/>
        <end position="1422"/>
    </location>
</feature>
<feature type="strand" evidence="22">
    <location>
        <begin position="1424"/>
        <end position="1432"/>
    </location>
</feature>
<feature type="strand" evidence="22">
    <location>
        <begin position="1445"/>
        <end position="1451"/>
    </location>
</feature>
<feature type="helix" evidence="22">
    <location>
        <begin position="1484"/>
        <end position="1491"/>
    </location>
</feature>
<feature type="helix" evidence="29">
    <location>
        <begin position="1501"/>
        <end position="1521"/>
    </location>
</feature>
<feature type="helix" evidence="29">
    <location>
        <begin position="1534"/>
        <end position="1543"/>
    </location>
</feature>
<feature type="helix" evidence="29">
    <location>
        <begin position="1548"/>
        <end position="1568"/>
    </location>
</feature>
<feature type="strand" evidence="28">
    <location>
        <begin position="1592"/>
        <end position="1594"/>
    </location>
</feature>
<feature type="helix" evidence="28">
    <location>
        <begin position="1597"/>
        <end position="1601"/>
    </location>
</feature>
<feature type="strand" evidence="28">
    <location>
        <begin position="1606"/>
        <end position="1609"/>
    </location>
</feature>
<feature type="helix" evidence="22">
    <location>
        <begin position="3583"/>
        <end position="3590"/>
    </location>
</feature>
<feature type="helix" evidence="22">
    <location>
        <begin position="3595"/>
        <end position="3604"/>
    </location>
</feature>
<feature type="helix" evidence="22">
    <location>
        <begin position="3609"/>
        <end position="3624"/>
    </location>
</feature>
<feature type="helix" evidence="22">
    <location>
        <begin position="3625"/>
        <end position="3627"/>
    </location>
</feature>
<feature type="helix" evidence="22">
    <location>
        <begin position="3630"/>
        <end position="3639"/>
    </location>
</feature>
<feature type="helix" evidence="22">
    <location>
        <begin position="3643"/>
        <end position="3646"/>
    </location>
</feature>
<evidence type="ECO:0000250" key="1">
    <source>
        <dbReference type="UniProtKB" id="Q8C8R3"/>
    </source>
</evidence>
<evidence type="ECO:0000255" key="2">
    <source>
        <dbReference type="PROSITE-ProRule" id="PRU00064"/>
    </source>
</evidence>
<evidence type="ECO:0000255" key="3">
    <source>
        <dbReference type="PROSITE-ProRule" id="PRU00485"/>
    </source>
</evidence>
<evidence type="ECO:0000256" key="4">
    <source>
        <dbReference type="SAM" id="MobiDB-lite"/>
    </source>
</evidence>
<evidence type="ECO:0000269" key="5">
    <source>
    </source>
</evidence>
<evidence type="ECO:0000269" key="6">
    <source>
    </source>
</evidence>
<evidence type="ECO:0000269" key="7">
    <source>
    </source>
</evidence>
<evidence type="ECO:0000269" key="8">
    <source>
    </source>
</evidence>
<evidence type="ECO:0000269" key="9">
    <source>
    </source>
</evidence>
<evidence type="ECO:0000269" key="10">
    <source>
    </source>
</evidence>
<evidence type="ECO:0000269" key="11">
    <source>
    </source>
</evidence>
<evidence type="ECO:0000269" key="12">
    <source>
    </source>
</evidence>
<evidence type="ECO:0000269" key="13">
    <source>
    </source>
</evidence>
<evidence type="ECO:0000269" key="14">
    <source>
    </source>
</evidence>
<evidence type="ECO:0000269" key="15">
    <source>
    </source>
</evidence>
<evidence type="ECO:0000303" key="16">
    <source>
    </source>
</evidence>
<evidence type="ECO:0000303" key="17">
    <source>
    </source>
</evidence>
<evidence type="ECO:0000303" key="18">
    <source>
    </source>
</evidence>
<evidence type="ECO:0000303" key="19">
    <source>
    </source>
</evidence>
<evidence type="ECO:0000305" key="20"/>
<evidence type="ECO:0007744" key="21">
    <source>
    </source>
</evidence>
<evidence type="ECO:0007829" key="22">
    <source>
        <dbReference type="PDB" id="4D8O"/>
    </source>
</evidence>
<evidence type="ECO:0007829" key="23">
    <source>
        <dbReference type="PDB" id="4RLV"/>
    </source>
</evidence>
<evidence type="ECO:0007829" key="24">
    <source>
        <dbReference type="PDB" id="4RLY"/>
    </source>
</evidence>
<evidence type="ECO:0007829" key="25">
    <source>
        <dbReference type="PDB" id="5Y4D"/>
    </source>
</evidence>
<evidence type="ECO:0007829" key="26">
    <source>
        <dbReference type="PDB" id="5Y4E"/>
    </source>
</evidence>
<evidence type="ECO:0007829" key="27">
    <source>
        <dbReference type="PDB" id="5Y4F"/>
    </source>
</evidence>
<evidence type="ECO:0007829" key="28">
    <source>
        <dbReference type="PDB" id="5YIS"/>
    </source>
</evidence>
<evidence type="ECO:0007829" key="29">
    <source>
        <dbReference type="PDB" id="6KZJ"/>
    </source>
</evidence>
<evidence type="ECO:0007829" key="30">
    <source>
        <dbReference type="PDB" id="6M3Q"/>
    </source>
</evidence>
<protein>
    <recommendedName>
        <fullName>Ankyrin-2</fullName>
        <shortName>ANK-2</shortName>
    </recommendedName>
    <alternativeName>
        <fullName>Ankyrin-B</fullName>
    </alternativeName>
    <alternativeName>
        <fullName>Brain ankyrin</fullName>
    </alternativeName>
    <alternativeName>
        <fullName>Non-erythroid ankyrin</fullName>
    </alternativeName>
</protein>
<keyword id="KW-0002">3D-structure</keyword>
<keyword id="KW-0025">Alternative splicing</keyword>
<keyword id="KW-0040">ANK repeat</keyword>
<keyword id="KW-1003">Cell membrane</keyword>
<keyword id="KW-0963">Cytoplasm</keyword>
<keyword id="KW-0206">Cytoskeleton</keyword>
<keyword id="KW-0225">Disease variant</keyword>
<keyword id="KW-0254">Endocytosis</keyword>
<keyword id="KW-0967">Endosome</keyword>
<keyword id="KW-0454">Long QT syndrome</keyword>
<keyword id="KW-0458">Lysosome</keyword>
<keyword id="KW-0472">Membrane</keyword>
<keyword id="KW-0496">Mitochondrion</keyword>
<keyword id="KW-0597">Phosphoprotein</keyword>
<keyword id="KW-0628">Postsynaptic cell membrane</keyword>
<keyword id="KW-0653">Protein transport</keyword>
<keyword id="KW-1267">Proteomics identification</keyword>
<keyword id="KW-1185">Reference proteome</keyword>
<keyword id="KW-0677">Repeat</keyword>
<keyword id="KW-0770">Synapse</keyword>
<keyword id="KW-0813">Transport</keyword>
<reference key="1">
    <citation type="journal article" date="1991" name="J. Cell Biol.">
        <title>Isolation and characterization of cDNAs encoding human brain ankyrins reveal a family of alternatively spliced genes.</title>
        <authorList>
            <person name="Otto E."/>
            <person name="Kunimoto M."/>
            <person name="McLaughlin T."/>
            <person name="Bennett V."/>
        </authorList>
    </citation>
    <scope>NUCLEOTIDE SEQUENCE [MRNA] (ISOFORM 2)</scope>
    <scope>NUCLEOTIDE SEQUENCE [MRNA] OF 1477-2110 (ISOFORM 3)</scope>
    <scope>TISSUE SPECIFICITY</scope>
    <source>
        <tissue>Brain stem</tissue>
    </source>
</reference>
<reference key="2">
    <citation type="submission" date="1999-05" db="EMBL/GenBank/DDBJ databases">
        <authorList>
            <person name="Carpenter S."/>
        </authorList>
    </citation>
    <scope>SEQUENCE REVISION</scope>
</reference>
<reference key="3">
    <citation type="journal article" date="1993" name="J. Cell Biol.">
        <title>440-kD ankyrinB: structure of the major developmentally regulated domain and selective localization in unmyelinated axons.</title>
        <authorList>
            <person name="Chan W."/>
            <person name="Kordeli E."/>
            <person name="Bennett V."/>
        </authorList>
    </citation>
    <scope>NUCLEOTIDE SEQUENCE [MRNA] (ISOFORM 3)</scope>
    <source>
        <tissue>Brain stem</tissue>
    </source>
</reference>
<reference key="4">
    <citation type="journal article" date="2007" name="BMC Genomics">
        <title>The full-ORF clone resource of the German cDNA consortium.</title>
        <authorList>
            <person name="Bechtel S."/>
            <person name="Rosenfelder H."/>
            <person name="Duda A."/>
            <person name="Schmidt C.P."/>
            <person name="Ernst U."/>
            <person name="Wellenreuther R."/>
            <person name="Mehrle A."/>
            <person name="Schuster C."/>
            <person name="Bahr A."/>
            <person name="Bloecker H."/>
            <person name="Heubner D."/>
            <person name="Hoerlein A."/>
            <person name="Michel G."/>
            <person name="Wedler H."/>
            <person name="Koehrer K."/>
            <person name="Ottenwaelder B."/>
            <person name="Poustka A."/>
            <person name="Wiemann S."/>
            <person name="Schupp I."/>
        </authorList>
    </citation>
    <scope>NUCLEOTIDE SEQUENCE [LARGE SCALE MRNA] (ISOFORM 4)</scope>
    <source>
        <tissue>Retina</tissue>
    </source>
</reference>
<reference key="5">
    <citation type="journal article" date="2005" name="Nature">
        <title>Generation and annotation of the DNA sequences of human chromosomes 2 and 4.</title>
        <authorList>
            <person name="Hillier L.W."/>
            <person name="Graves T.A."/>
            <person name="Fulton R.S."/>
            <person name="Fulton L.A."/>
            <person name="Pepin K.H."/>
            <person name="Minx P."/>
            <person name="Wagner-McPherson C."/>
            <person name="Layman D."/>
            <person name="Wylie K."/>
            <person name="Sekhon M."/>
            <person name="Becker M.C."/>
            <person name="Fewell G.A."/>
            <person name="Delehaunty K.D."/>
            <person name="Miner T.L."/>
            <person name="Nash W.E."/>
            <person name="Kremitzki C."/>
            <person name="Oddy L."/>
            <person name="Du H."/>
            <person name="Sun H."/>
            <person name="Bradshaw-Cordum H."/>
            <person name="Ali J."/>
            <person name="Carter J."/>
            <person name="Cordes M."/>
            <person name="Harris A."/>
            <person name="Isak A."/>
            <person name="van Brunt A."/>
            <person name="Nguyen C."/>
            <person name="Du F."/>
            <person name="Courtney L."/>
            <person name="Kalicki J."/>
            <person name="Ozersky P."/>
            <person name="Abbott S."/>
            <person name="Armstrong J."/>
            <person name="Belter E.A."/>
            <person name="Caruso L."/>
            <person name="Cedroni M."/>
            <person name="Cotton M."/>
            <person name="Davidson T."/>
            <person name="Desai A."/>
            <person name="Elliott G."/>
            <person name="Erb T."/>
            <person name="Fronick C."/>
            <person name="Gaige T."/>
            <person name="Haakenson W."/>
            <person name="Haglund K."/>
            <person name="Holmes A."/>
            <person name="Harkins R."/>
            <person name="Kim K."/>
            <person name="Kruchowski S.S."/>
            <person name="Strong C.M."/>
            <person name="Grewal N."/>
            <person name="Goyea E."/>
            <person name="Hou S."/>
            <person name="Levy A."/>
            <person name="Martinka S."/>
            <person name="Mead K."/>
            <person name="McLellan M.D."/>
            <person name="Meyer R."/>
            <person name="Randall-Maher J."/>
            <person name="Tomlinson C."/>
            <person name="Dauphin-Kohlberg S."/>
            <person name="Kozlowicz-Reilly A."/>
            <person name="Shah N."/>
            <person name="Swearengen-Shahid S."/>
            <person name="Snider J."/>
            <person name="Strong J.T."/>
            <person name="Thompson J."/>
            <person name="Yoakum M."/>
            <person name="Leonard S."/>
            <person name="Pearman C."/>
            <person name="Trani L."/>
            <person name="Radionenko M."/>
            <person name="Waligorski J.E."/>
            <person name="Wang C."/>
            <person name="Rock S.M."/>
            <person name="Tin-Wollam A.-M."/>
            <person name="Maupin R."/>
            <person name="Latreille P."/>
            <person name="Wendl M.C."/>
            <person name="Yang S.-P."/>
            <person name="Pohl C."/>
            <person name="Wallis J.W."/>
            <person name="Spieth J."/>
            <person name="Bieri T.A."/>
            <person name="Berkowicz N."/>
            <person name="Nelson J.O."/>
            <person name="Osborne J."/>
            <person name="Ding L."/>
            <person name="Meyer R."/>
            <person name="Sabo A."/>
            <person name="Shotland Y."/>
            <person name="Sinha P."/>
            <person name="Wohldmann P.E."/>
            <person name="Cook L.L."/>
            <person name="Hickenbotham M.T."/>
            <person name="Eldred J."/>
            <person name="Williams D."/>
            <person name="Jones T.A."/>
            <person name="She X."/>
            <person name="Ciccarelli F.D."/>
            <person name="Izaurralde E."/>
            <person name="Taylor J."/>
            <person name="Schmutz J."/>
            <person name="Myers R.M."/>
            <person name="Cox D.R."/>
            <person name="Huang X."/>
            <person name="McPherson J.D."/>
            <person name="Mardis E.R."/>
            <person name="Clifton S.W."/>
            <person name="Warren W.C."/>
            <person name="Chinwalla A.T."/>
            <person name="Eddy S.R."/>
            <person name="Marra M.A."/>
            <person name="Ovcharenko I."/>
            <person name="Furey T.S."/>
            <person name="Miller W."/>
            <person name="Eichler E.E."/>
            <person name="Bork P."/>
            <person name="Suyama M."/>
            <person name="Torrents D."/>
            <person name="Waterston R.H."/>
            <person name="Wilson R.K."/>
        </authorList>
    </citation>
    <scope>NUCLEOTIDE SEQUENCE [LARGE SCALE GENOMIC DNA]</scope>
</reference>
<reference key="6">
    <citation type="journal article" date="2004" name="Genome Res.">
        <title>The status, quality, and expansion of the NIH full-length cDNA project: the Mammalian Gene Collection (MGC).</title>
        <authorList>
            <consortium name="The MGC Project Team"/>
        </authorList>
    </citation>
    <scope>NUCLEOTIDE SEQUENCE [LARGE SCALE MRNA] (ISOFORM 5)</scope>
</reference>
<reference key="7">
    <citation type="journal article" date="1991" name="Genomics">
        <title>Isolation and chromosomal localization of a novel nonerythroid ankyrin gene.</title>
        <authorList>
            <person name="Tse W.T."/>
            <person name="Menninger J.C."/>
            <person name="Yang-Feng T.L."/>
            <person name="Francke U."/>
            <person name="Sahr K.E."/>
            <person name="Lux S.E."/>
            <person name="Ward D.C."/>
            <person name="Forget B.G."/>
        </authorList>
    </citation>
    <scope>NUCLEOTIDE SEQUENCE [GENOMIC DNA] OF 463-495</scope>
    <scope>TISSUE SPECIFICITY</scope>
</reference>
<reference key="8">
    <citation type="journal article" date="2003" name="Nature">
        <title>Ankyrin-B mutation causes type 4 long-QT cardiac arrhythmia and sudden cardiac death.</title>
        <authorList>
            <person name="Mohler P.J."/>
            <person name="Schott J.-J."/>
            <person name="Gramolini A.O."/>
            <person name="Dilly K.W."/>
            <person name="Guatimosim S."/>
            <person name="duBell W.H."/>
            <person name="Song L.-S."/>
            <person name="Haurogne K."/>
            <person name="Kyndt F."/>
            <person name="Ali M.E."/>
            <person name="Rogers T.B."/>
            <person name="Lederer W.J."/>
            <person name="Escande D."/>
            <person name="Le Marec H."/>
            <person name="Bennett V."/>
        </authorList>
    </citation>
    <scope>INVOLVEMENT IN LQT4</scope>
    <scope>VARIANT LQT4 GLY-1458</scope>
    <scope>CHARACTERIZATION OF VARIANT LQT4 GLY-1458</scope>
    <scope>FUNCTION</scope>
</reference>
<reference key="9">
    <citation type="journal article" date="2004" name="J. Biol. Chem.">
        <title>Ankyrin-B targets beta2-spectrin to an intracellular compartment in neonatal cardiomyocytes.</title>
        <authorList>
            <person name="Mohler P.J."/>
            <person name="Yoon W."/>
            <person name="Bennett V."/>
        </authorList>
    </citation>
    <scope>INTERACTION WITH SPTBN1</scope>
    <scope>MUTAGENESIS OF 975-ASP--ARG-977; ALA-1000 AND 1100-GLU--ASP-1103</scope>
</reference>
<reference key="10">
    <citation type="journal article" date="2005" name="J. Biol. Chem.">
        <title>The ammonium transporter RhBG: requirement of a tyrosine-based signal and ankyrin-G for basolateral targeting and membrane anchorage in polarized kidney epithelial cells.</title>
        <authorList>
            <person name="Lopez C."/>
            <person name="Metral S."/>
            <person name="Eladari D."/>
            <person name="Drevensek S."/>
            <person name="Gane P."/>
            <person name="Chambrey R."/>
            <person name="Bennett V."/>
            <person name="Cartron J.-P."/>
            <person name="Le Van Kim C."/>
            <person name="Colin Y."/>
        </authorList>
    </citation>
    <scope>INTERACTION WITH RHBG</scope>
</reference>
<reference key="11">
    <citation type="journal article" date="2009" name="Exp. Eye Res.">
        <title>Ankyrin-B is required for coordinated expression of beta-2-spectrin, the Na/K-ATPase and the Na/Ca exchanger in the inner segment of rod photoreceptors.</title>
        <authorList>
            <person name="Kizhatil K."/>
            <person name="Sandhu N.K."/>
            <person name="Peachey N.S."/>
            <person name="Bennett V."/>
        </authorList>
    </citation>
    <scope>SUBUNIT</scope>
    <scope>SUBCELLULAR LOCATION</scope>
    <scope>TISSUE SPECIFICITY</scope>
</reference>
<reference key="12">
    <citation type="journal article" date="2011" name="BMC Syst. Biol.">
        <title>Initial characterization of the human central proteome.</title>
        <authorList>
            <person name="Burkard T.R."/>
            <person name="Planyavsky M."/>
            <person name="Kaupe I."/>
            <person name="Breitwieser F.P."/>
            <person name="Buerckstuemmer T."/>
            <person name="Bennett K.L."/>
            <person name="Superti-Furga G."/>
            <person name="Colinge J."/>
        </authorList>
    </citation>
    <scope>IDENTIFICATION BY MASS SPECTROMETRY [LARGE SCALE ANALYSIS]</scope>
</reference>
<reference key="13">
    <citation type="journal article" date="2011" name="Sci. Signal.">
        <title>System-wide temporal characterization of the proteome and phosphoproteome of human embryonic stem cell differentiation.</title>
        <authorList>
            <person name="Rigbolt K.T."/>
            <person name="Prokhorova T.A."/>
            <person name="Akimov V."/>
            <person name="Henningsen J."/>
            <person name="Johansen P.T."/>
            <person name="Kratchmarova I."/>
            <person name="Kassem M."/>
            <person name="Mann M."/>
            <person name="Olsen J.V."/>
            <person name="Blagoev B."/>
        </authorList>
    </citation>
    <scope>IDENTIFICATION BY MASS SPECTROMETRY [LARGE SCALE ANALYSIS]</scope>
</reference>
<reference key="14">
    <citation type="journal article" date="2014" name="J. Proteomics">
        <title>An enzyme assisted RP-RPLC approach for in-depth analysis of human liver phosphoproteome.</title>
        <authorList>
            <person name="Bian Y."/>
            <person name="Song C."/>
            <person name="Cheng K."/>
            <person name="Dong M."/>
            <person name="Wang F."/>
            <person name="Huang J."/>
            <person name="Sun D."/>
            <person name="Wang L."/>
            <person name="Ye M."/>
            <person name="Zou H."/>
        </authorList>
    </citation>
    <scope>PHOSPHORYLATION [LARGE SCALE ANALYSIS] AT SER-846</scope>
    <scope>IDENTIFICATION BY MASS SPECTROMETRY [LARGE SCALE ANALYSIS]</scope>
    <source>
        <tissue>Liver</tissue>
    </source>
</reference>
<reference key="15">
    <citation type="journal article" date="2016" name="Elife">
        <title>Ankyrin-B is a PI3P effector that promotes polarized alpha5beta1-integrin recycling via recruiting RabGAP1L to early endosomes.</title>
        <authorList>
            <person name="Qu F."/>
            <person name="Lorenzo D.N."/>
            <person name="King S.J."/>
            <person name="Brooks R."/>
            <person name="Bear J.E."/>
            <person name="Bennett V."/>
        </authorList>
    </citation>
    <scope>INTERACTION WITH RABGAP1L</scope>
</reference>
<reference key="16">
    <citation type="journal article" date="2012" name="Proc. Natl. Acad. Sci. U.S.A.">
        <title>Structure of the ZU5-ZU5-UPA-DD tandem of ankyrin-B reveals interaction surfaces necessary for ankyrin function.</title>
        <authorList>
            <person name="Wang C."/>
            <person name="Yu C."/>
            <person name="Ye F."/>
            <person name="Wei Z."/>
            <person name="Zhang M."/>
        </authorList>
    </citation>
    <scope>X-RAY CRYSTALLOGRAPHY (2.2 ANGSTROMS) OF 966-3620</scope>
    <scope>DOMAIN DEATH 1</scope>
    <scope>DOMAIN UPA</scope>
    <scope>DOMAINS ZU5</scope>
</reference>
<reference key="17">
    <citation type="journal article" date="2004" name="Proc. Natl. Acad. Sci. U.S.A.">
        <title>A cardiac arrhythmia syndrome caused by loss of ankyrin-B function.</title>
        <authorList>
            <person name="Mohler P.J."/>
            <person name="Splawski I."/>
            <person name="Napolitano C."/>
            <person name="Bottelli G."/>
            <person name="Sharpe L."/>
            <person name="Timothy K."/>
            <person name="Priori S.G."/>
            <person name="Keating M.T."/>
            <person name="Bennett V."/>
        </authorList>
    </citation>
    <scope>VARIANTS LQT4 GLY-1458; ILE-3740; ASN-3744; TRP-3906 AND LYS-3931</scope>
    <scope>CHARACTERIZATION OF VARIANTS LQT4</scope>
</reference>
<reference key="18">
    <citation type="journal article" date="2006" name="Science">
        <title>The consensus coding sequences of human breast and colorectal cancers.</title>
        <authorList>
            <person name="Sjoeblom T."/>
            <person name="Jones S."/>
            <person name="Wood L.D."/>
            <person name="Parsons D.W."/>
            <person name="Lin J."/>
            <person name="Barber T.D."/>
            <person name="Mandelker D."/>
            <person name="Leary R.J."/>
            <person name="Ptak J."/>
            <person name="Silliman N."/>
            <person name="Szabo S."/>
            <person name="Buckhaults P."/>
            <person name="Farrell C."/>
            <person name="Meeh P."/>
            <person name="Markowitz S.D."/>
            <person name="Willis J."/>
            <person name="Dawson D."/>
            <person name="Willson J.K.V."/>
            <person name="Gazdar A.F."/>
            <person name="Hartigan J."/>
            <person name="Wu L."/>
            <person name="Liu C."/>
            <person name="Parmigiani G."/>
            <person name="Park B.H."/>
            <person name="Bachman K.E."/>
            <person name="Papadopoulos N."/>
            <person name="Vogelstein B."/>
            <person name="Kinzler K.W."/>
            <person name="Velculescu V.E."/>
        </authorList>
    </citation>
    <scope>VARIANTS [LARGE SCALE ANALYSIS] GLU-685; ARG-1267 AND LYS-3653</scope>
</reference>
<reference key="19">
    <citation type="journal article" date="2007" name="PLoS ONE">
        <title>Ankyrin-B syndrome: enhanced cardiac function balanced by risk of cardiac death and premature senescence.</title>
        <authorList>
            <person name="Mohler P.J."/>
            <person name="Healy J.A."/>
            <person name="Xue H."/>
            <person name="Puca A.A."/>
            <person name="Kline C.F."/>
            <person name="Allingham R.R."/>
            <person name="Kranias E.G."/>
            <person name="Rockman H.A."/>
            <person name="Bennett V."/>
        </authorList>
    </citation>
    <scope>VARIANTS LQT4 GLY-1458; ILE-3740; ASN-3744; TRP-3906 AND LYS-3931</scope>
    <scope>VARIANT ASP-1555</scope>
</reference>
<proteinExistence type="evidence at protein level"/>
<sequence length="3957" mass="433715">MMNEDAAQKSDSGEKFNGSSQRRKRPKKSDSNASFLRAARAGNLDKVVEYLKGGIDINTCNQNGLNALHLAAKEGHVGLVQELLGRGSSVDSATKKGNTALHIASLAGQAEVVKVLVKEGANINAQSQNGFTPLYMAAQENHIDVVKYLLENGANQSTATEDGFTPLAVALQQGHNQAVAILLENDTKGKVRLPALHIAARKDDTKSAALLLQNDHNADVQSKMMVNRTTESGFTPLHIAAHYGNVNVATLLLNRGAAVDFTARNGITPLHVASKRGNTNMVKLLLDRGGQIDAKTRDGLTPLHCAARSGHDQVVELLLERGAPLLARTKNGLSPLHMAAQGDHVECVKHLLQHKAPVDDVTLDYLTALHVAAHCGHYRVTKLLLDKRANPNARALNGFTPLHIACKKNRIKVMELLVKYGASIQAITESGLTPIHVAAFMGHLNIVLLLLQNGASPDVTNIRGETALHMAARAGQVEVVRCLLRNGALVDARAREEQTPLHIASRLGKTEIVQLLLQHMAHPDAATTNGYTPLHISAREGQVDVASVLLEAGAAHSLATKKGFTPLHVAAKYGSLDVAKLLLQRRAAADSAGKNGLTPLHVAAHYDNQKVALLLLEKGASPHATAKNGYTPLHIAAKKNQMQIASTLLNYGAETNIVTKQGVTPLHLASQEGHTDMVTLLLDKGANIHMSTKSGLTSLHLAAQEDKVNVADILTKHGADQDAHTKLGYTPLIVACHYGNVKMVNFLLKQGANVNAKTKNGYTPLHQAAQQGHTHIINVLLQHGAKPNATTANGNTALAIAKRLGYISVVDTLKVVTEEVTTTTTTITEKHKLNVPETMTEVLDVSDEEGDDTMTGDGGEYLRPEDLKELGDDSLPSSQFLDGMNYLRYSLEGGRSDSLRSFSSDRSHTLSHASYLRDSAVMDDSVVIPSHQVSTLAKEAERNSYRLSWGTENLDNVALSSSPIHSGFLVSFMVDARGGAMRGCRHNGLRIIIPPRKCTAPTRVTCRLVKRHRLATMPPMVEGEGLASRLIEVGPSGAQFLGKLHLPTAPPPLNEGESLVSRILQLGPPGTKFLGPVIVEIPHFAALRGKERELVVLRSENGDSWKEHFCDYTEDELNEILNGMDEVLDSPEDLEKKRICRIITRDFPQYFAVVSRIKQDSNLIGPEGGVLSSTVVPQVQAVFPEGALTKRIRVGLQAQPMHSELVKKILGNKATFSPIVTLEPRRRKFHKPITMTIPVPKASSDVMLNGFGGDAPTLRLLCSITGGTTPAQWEDITGTTPLTFVNECVSFTTNVSARFWLIDCRQIQESVTFASQVYREIICVPYMAKFVVFAKSHDPIEARLRCFCMTDDKVDKTLEQQENFAEVARSRDVEVLEGKPIYVDCFGNLVPLTKSGQHHIFSFFAFKENRLPLFVKVRDTTQEPCGRLSFMKEPKSTRGLVHQAICNLNITLPIYTKESESDQEQEEEIDMTSEKNDETESTETSVLKSHLVNEVPVLASPDLLSEVSEMKQDLIKMTAILTTDVSDKAGSIKVKELVKAAEEEPGEPFEIVERVKEDLEKVNEILRSGTCTRDESSVQSSRSERGLVEEEWVIVSDEEIEEARQKAPLEITEYPCVEVRIDKEIKGKVEKDSTGLVNYLTDDLNTCVPLPKEQLQTVQDKAGKKCEALAVGRSSEKEGKDIPPDETQSTQKQHKPSLGIKKPVRRKLKEKQKQKEEGLQASAEKAELKKGSSEESLGEDPGLAPEPLPTVKATSPLIEETPIGSIKDKVKALQKRVEDEQKGRSKLPIRVKGKEDVPKKTTHRPHPAASPSLKSERHAPGSPSPKTERHSTLSSSAKTERHPPVSPSSKTEKHSPVSPSAKTERHSPASSSSKTEKHSPVSPSTKTERHSPVSSTKTERHPPVSPSGKTDKRPPVSPSGRTEKHPPVSPGRTEKRLPVSPSGRTDKHQPVSTAGKTEKHLPVSPSGKTEKQPPVSPTSKTERIEETMSVRELMKAFQSGQDPSKHKTGLFEHKSAKQKQPQEKGKVRVEKEKGPILTQREAQKTENQTIKRGQRLPVTGTAESKRGVRVSSIGVKKEDAAGGKEKVLSHKIPEPVQSVPEEESHRESEVPKEKMADEQGDMDLQISPDRKTSTDFSEVIKQELEDNDKYQQFRLSEETEKAQLHLDQVLTSPFNTTFPLDYMKDEFLPALSLQSGALDGSSESLKNEGVAGSPCGSLMEGTPQISSEESYKHEGLAETPETSPESLSFSPKKSEEQTGETKESTKTETTTEIRSEKEHPTTKDITGGSEERGATVTEDSETSTESFQKEATLGSPKDTSPKRQDDCTGSCSVALAKETPTGLTEEAACDEGQRTFGSSAHKTQTDSEVQESTATSDETKALPLPEASVKTDTGTESKPQGVIRSPQGLELALPSRDSEVLSAVADDSLAVSHKDSLEASPVLEDNSSHKTPDSLEPSPLKESPCRDSLESSPVEPKMKAGIFPSHFPLPAAVAKTELLTEVASVRSRLLRDPDGSAEDDSLEQTSLMESSGKSPLSPDTPSSEEVSYEVTPKTTDVSTPKPAVIHECAEEDDSENGEKKRFTPEEEMFKMVTKIKMFDELEQEAKQKRDYKKEPKQEESSSSSDPDADCSVDVDEPKHTGSGEDESGVPVLVTSESRKVSSSSESEPELAQLKKGADSGLLPEPVIRVQPPSPLPSSMDSNSSPEEVQFQPVVSKQYTFKMNEDTQEEPGKSEEEKDSESHLAEDRHAVSTEAEDRSYDKLNRDTDQPKICDGHGCEAMSPSSSAAPVSSGLQSPTGDDVDEQPVIYKESLALQGTHEKDTEGEELDVSRAESPQADCPSESFSSSSSLPHCLVSEGKELDEDISATSSIQKTEVTKTDETFENLPKDCPSQDSSITTQTDRFSMDVPVSDLAENDEIYDPQITSPYENVPSQSFFSSEESKTQTDANHTTSFHSSEVYSVTITSPVEDVVVASSSSGTVLSKESNFEGQDIKMESQQESTLWEMQSDSVSSSFEPTMSATTTVVGEQISKVIITKTDVDSDSWSEIREDDEAFEARVKEEEQKIFGLMVDRQSQGTTPDTTPARTPTEEGTPTSEQNPFLFQEGKLFEMTRSGAIDMTKRSYADESFHFFQIGQESREETLSEDVKEGATGADPLPLETSAESLALSESKETVDDEADLLPDDVSEEVEEIPASDAQLNSQMGISASTETPTKEAVSVGTKDLPTVQTGDIPPLSGVKQISCPDSSEPAVQVQLDFSTLTRSVYSDRGDDSPDSSPEEQKSVIEIPTAPMENVPFTESKSKIPVRTMPTSTPAPPSAEYESSVSEDFLSSVDEENKADEAKPKSKLPVKVPLQRVEQQLSDLDTSVQKTVAPQGQDMASIAPDNRSKSESDASSLDSKTKCPVKTRSYTETETESRERAEELELESEEGATRPKILTSRLPVKSRSTTSSCRGGTSPTKESKEHFFDLYRNSIEFFEEISDEASKLVDRLTQSEREQEIVSDDESSSALEVSVIENLPPVETEHSVPEDIFDTRPIWDESIETLIERIPDENGHDHAEDPQDEQERIEERLAYIADHLGFSWTELARELDFTEEQIHQIRIENPNSLQDQSHALLKYWLERDGKHATDTNLVECLTKINRMDIVHLMETNTEPLQERISHSYAEIEQTITLDHSEGFSVLQEELCTAQHKQKEEQAVSKESETCDHPPIVSEEDISVGYSTFQDGVPKTEGDSSATALFPQTHKEQVQQDFSGKMQDLPEESSLEYQQEYFVTTPGTETSETQKAMIVPSSPSKTPEEVSTPAEEEKLYLQTPTSSERGGSPIIQEPEEPSEHREESSPRKTSLVIVESADNQPETCERLDEDAAFEKGDDMPEIPPETVTEEEYIDEHGHTVVKKVTRKIIRRYVSSEGTEKEEIMVQGMPQEPVNIEEGDGYSKVIKRVVLKSDTEQSEDNNE</sequence>
<organism>
    <name type="scientific">Homo sapiens</name>
    <name type="common">Human</name>
    <dbReference type="NCBI Taxonomy" id="9606"/>
    <lineage>
        <taxon>Eukaryota</taxon>
        <taxon>Metazoa</taxon>
        <taxon>Chordata</taxon>
        <taxon>Craniata</taxon>
        <taxon>Vertebrata</taxon>
        <taxon>Euteleostomi</taxon>
        <taxon>Mammalia</taxon>
        <taxon>Eutheria</taxon>
        <taxon>Euarchontoglires</taxon>
        <taxon>Primates</taxon>
        <taxon>Haplorrhini</taxon>
        <taxon>Catarrhini</taxon>
        <taxon>Hominidae</taxon>
        <taxon>Homo</taxon>
    </lineage>
</organism>
<gene>
    <name type="primary">ANK2</name>
    <name evidence="19" type="synonym">ANKB</name>
</gene>
<dbReference type="EMBL" id="X56957">
    <property type="protein sequence ID" value="CAA40278.1"/>
    <property type="molecule type" value="mRNA"/>
</dbReference>
<dbReference type="EMBL" id="X56958">
    <property type="protein sequence ID" value="CAA40279.2"/>
    <property type="molecule type" value="mRNA"/>
</dbReference>
<dbReference type="EMBL" id="Z26634">
    <property type="protein sequence ID" value="CAB42644.1"/>
    <property type="status" value="ALT_SEQ"/>
    <property type="molecule type" value="mRNA"/>
</dbReference>
<dbReference type="EMBL" id="BX537758">
    <property type="protein sequence ID" value="CAD97827.1"/>
    <property type="molecule type" value="mRNA"/>
</dbReference>
<dbReference type="EMBL" id="AC004057">
    <property type="status" value="NOT_ANNOTATED_CDS"/>
    <property type="molecule type" value="Genomic_DNA"/>
</dbReference>
<dbReference type="EMBL" id="AC093617">
    <property type="status" value="NOT_ANNOTATED_CDS"/>
    <property type="molecule type" value="Genomic_DNA"/>
</dbReference>
<dbReference type="EMBL" id="AC093879">
    <property type="status" value="NOT_ANNOTATED_CDS"/>
    <property type="molecule type" value="Genomic_DNA"/>
</dbReference>
<dbReference type="EMBL" id="AC093900">
    <property type="status" value="NOT_ANNOTATED_CDS"/>
    <property type="molecule type" value="Genomic_DNA"/>
</dbReference>
<dbReference type="EMBL" id="BC125235">
    <property type="protein sequence ID" value="AAI25236.1"/>
    <property type="molecule type" value="mRNA"/>
</dbReference>
<dbReference type="EMBL" id="BC125236">
    <property type="protein sequence ID" value="AAI25237.1"/>
    <property type="status" value="ALT_FRAME"/>
    <property type="molecule type" value="mRNA"/>
</dbReference>
<dbReference type="EMBL" id="M37123">
    <property type="protein sequence ID" value="AAA62828.1"/>
    <property type="molecule type" value="Genomic_DNA"/>
</dbReference>
<dbReference type="CCDS" id="CCDS3702.1">
    <molecule id="Q01484-4"/>
</dbReference>
<dbReference type="CCDS" id="CCDS43261.1">
    <molecule id="Q01484-2"/>
</dbReference>
<dbReference type="CCDS" id="CCDS54796.1">
    <molecule id="Q01484-5"/>
</dbReference>
<dbReference type="PIR" id="S37431">
    <property type="entry name" value="S37431"/>
</dbReference>
<dbReference type="RefSeq" id="NP_001120965.1">
    <molecule id="Q01484-5"/>
    <property type="nucleotide sequence ID" value="NM_001127493.3"/>
</dbReference>
<dbReference type="RefSeq" id="NP_001139.3">
    <molecule id="Q01484-4"/>
    <property type="nucleotide sequence ID" value="NM_001148.4"/>
</dbReference>
<dbReference type="RefSeq" id="NP_066187.2">
    <molecule id="Q01484-2"/>
    <property type="nucleotide sequence ID" value="NM_020977.3"/>
</dbReference>
<dbReference type="PDB" id="4D8O">
    <property type="method" value="X-ray"/>
    <property type="resolution" value="2.20 A"/>
    <property type="chains" value="A=966-1039, A=1073-1476, A=3562-3653"/>
</dbReference>
<dbReference type="PDB" id="4RLV">
    <property type="method" value="X-ray"/>
    <property type="resolution" value="3.49 A"/>
    <property type="chains" value="A=28-873"/>
</dbReference>
<dbReference type="PDB" id="4RLY">
    <property type="method" value="X-ray"/>
    <property type="resolution" value="2.50 A"/>
    <property type="chains" value="A=28-318"/>
</dbReference>
<dbReference type="PDB" id="5Y4D">
    <property type="method" value="X-ray"/>
    <property type="resolution" value="3.30 A"/>
    <property type="chains" value="A=28-693"/>
</dbReference>
<dbReference type="PDB" id="5Y4E">
    <property type="method" value="X-ray"/>
    <property type="resolution" value="2.34 A"/>
    <property type="chains" value="A/B=264-483, A/B=857-896"/>
</dbReference>
<dbReference type="PDB" id="5Y4F">
    <property type="method" value="X-ray"/>
    <property type="resolution" value="1.95 A"/>
    <property type="chains" value="A/B=430-873"/>
</dbReference>
<dbReference type="PDB" id="5YIR">
    <property type="method" value="X-ray"/>
    <property type="resolution" value="2.75 A"/>
    <property type="chains" value="C/G/H=1588-1614"/>
</dbReference>
<dbReference type="PDB" id="5YIS">
    <property type="method" value="X-ray"/>
    <property type="resolution" value="2.20 A"/>
    <property type="chains" value="C/D=1588-1614"/>
</dbReference>
<dbReference type="PDB" id="6KZJ">
    <property type="method" value="X-ray"/>
    <property type="resolution" value="1.50 A"/>
    <property type="chains" value="A=1499-1570"/>
</dbReference>
<dbReference type="PDB" id="6M3Q">
    <property type="method" value="X-ray"/>
    <property type="resolution" value="3.44 A"/>
    <property type="chains" value="E=951-1458"/>
</dbReference>
<dbReference type="PDB" id="8ZE8">
    <property type="method" value="X-ray"/>
    <property type="resolution" value="2.07 A"/>
    <property type="chains" value="C/E/F/H=1699-1710"/>
</dbReference>
<dbReference type="PDBsum" id="4D8O"/>
<dbReference type="PDBsum" id="4RLV"/>
<dbReference type="PDBsum" id="4RLY"/>
<dbReference type="PDBsum" id="5Y4D"/>
<dbReference type="PDBsum" id="5Y4E"/>
<dbReference type="PDBsum" id="5Y4F"/>
<dbReference type="PDBsum" id="5YIR"/>
<dbReference type="PDBsum" id="5YIS"/>
<dbReference type="PDBsum" id="6KZJ"/>
<dbReference type="PDBsum" id="6M3Q"/>
<dbReference type="PDBsum" id="8ZE8"/>
<dbReference type="SMR" id="Q01484"/>
<dbReference type="BioGRID" id="106784">
    <property type="interactions" value="87"/>
</dbReference>
<dbReference type="DIP" id="DIP-37425N"/>
<dbReference type="FunCoup" id="Q01484">
    <property type="interactions" value="594"/>
</dbReference>
<dbReference type="IntAct" id="Q01484">
    <property type="interactions" value="173"/>
</dbReference>
<dbReference type="MINT" id="Q01484"/>
<dbReference type="STRING" id="9606.ENSP00000349588"/>
<dbReference type="TCDB" id="8.A.28.1.1">
    <property type="family name" value="the ankyrin (ankyrin) family"/>
</dbReference>
<dbReference type="GlyCosmos" id="Q01484">
    <property type="glycosylation" value="4 sites, 1 glycan"/>
</dbReference>
<dbReference type="GlyGen" id="Q01484">
    <property type="glycosylation" value="7 sites, 3 N-linked glycans (2 sites), 1 O-linked glycan (5 sites)"/>
</dbReference>
<dbReference type="iPTMnet" id="Q01484"/>
<dbReference type="PhosphoSitePlus" id="Q01484"/>
<dbReference type="SwissPalm" id="Q01484"/>
<dbReference type="BioMuta" id="ANK2"/>
<dbReference type="DMDM" id="387912917"/>
<dbReference type="jPOST" id="Q01484"/>
<dbReference type="MassIVE" id="Q01484"/>
<dbReference type="PaxDb" id="9606-ENSP00000349588"/>
<dbReference type="PeptideAtlas" id="Q01484"/>
<dbReference type="ProteomicsDB" id="57958">
    <molecule id="Q01484-4"/>
</dbReference>
<dbReference type="ProteomicsDB" id="57959">
    <molecule id="Q01484-2"/>
</dbReference>
<dbReference type="ProteomicsDB" id="57960">
    <molecule id="Q01484-5"/>
</dbReference>
<dbReference type="ProteomicsDB" id="57961">
    <molecule id="Q01484-7"/>
</dbReference>
<dbReference type="Pumba" id="Q01484"/>
<dbReference type="ABCD" id="Q01484">
    <property type="antibodies" value="3 sequenced antibodies"/>
</dbReference>
<dbReference type="Antibodypedia" id="26481">
    <property type="antibodies" value="322 antibodies from 25 providers"/>
</dbReference>
<dbReference type="DNASU" id="287"/>
<dbReference type="Ensembl" id="ENST00000357077.9">
    <molecule id="Q01484-4"/>
    <property type="protein sequence ID" value="ENSP00000349588.4"/>
    <property type="gene ID" value="ENSG00000145362.21"/>
</dbReference>
<dbReference type="Ensembl" id="ENST00000394537.7">
    <molecule id="Q01484-2"/>
    <property type="protein sequence ID" value="ENSP00000378044.3"/>
    <property type="gene ID" value="ENSG00000145362.21"/>
</dbReference>
<dbReference type="Ensembl" id="ENST00000506722.5">
    <molecule id="Q01484-5"/>
    <property type="protein sequence ID" value="ENSP00000421067.1"/>
    <property type="gene ID" value="ENSG00000145362.21"/>
</dbReference>
<dbReference type="GeneID" id="287"/>
<dbReference type="KEGG" id="hsa:287"/>
<dbReference type="MANE-Select" id="ENST00000357077.9">
    <property type="protein sequence ID" value="ENSP00000349588.4"/>
    <property type="RefSeq nucleotide sequence ID" value="NM_001148.6"/>
    <property type="RefSeq protein sequence ID" value="NP_001139.3"/>
</dbReference>
<dbReference type="UCSC" id="uc003ibd.5">
    <molecule id="Q01484-4"/>
    <property type="organism name" value="human"/>
</dbReference>
<dbReference type="AGR" id="HGNC:493"/>
<dbReference type="CTD" id="287"/>
<dbReference type="DisGeNET" id="287"/>
<dbReference type="GeneCards" id="ANK2"/>
<dbReference type="HGNC" id="HGNC:493">
    <property type="gene designation" value="ANK2"/>
</dbReference>
<dbReference type="HPA" id="ENSG00000145362">
    <property type="expression patterns" value="Tissue enhanced (brain, retina, skeletal muscle)"/>
</dbReference>
<dbReference type="MalaCards" id="ANK2"/>
<dbReference type="MIM" id="106410">
    <property type="type" value="gene"/>
</dbReference>
<dbReference type="MIM" id="600919">
    <property type="type" value="phenotype"/>
</dbReference>
<dbReference type="neXtProt" id="NX_Q01484"/>
<dbReference type="OpenTargets" id="ENSG00000145362"/>
<dbReference type="Orphanet" id="101016">
    <property type="disease" value="Romano-Ward syndrome"/>
</dbReference>
<dbReference type="PharmGKB" id="PA24799"/>
<dbReference type="VEuPathDB" id="HostDB:ENSG00000145362"/>
<dbReference type="eggNOG" id="KOG4177">
    <property type="taxonomic scope" value="Eukaryota"/>
</dbReference>
<dbReference type="GeneTree" id="ENSGT00940000155279"/>
<dbReference type="HOGENOM" id="CLU_000134_7_2_1"/>
<dbReference type="InParanoid" id="Q01484"/>
<dbReference type="OrthoDB" id="20872at2759"/>
<dbReference type="PAN-GO" id="Q01484">
    <property type="GO annotations" value="6 GO annotations based on evolutionary models"/>
</dbReference>
<dbReference type="PhylomeDB" id="Q01484"/>
<dbReference type="TreeFam" id="TF351263"/>
<dbReference type="PathwayCommons" id="Q01484"/>
<dbReference type="Reactome" id="R-HSA-445095">
    <property type="pathway name" value="Interaction between L1 and Ankyrins"/>
</dbReference>
<dbReference type="Reactome" id="R-HSA-6807878">
    <property type="pathway name" value="COPI-mediated anterograde transport"/>
</dbReference>
<dbReference type="SignaLink" id="Q01484"/>
<dbReference type="SIGNOR" id="Q01484"/>
<dbReference type="BioGRID-ORCS" id="287">
    <property type="hits" value="13 hits in 1151 CRISPR screens"/>
</dbReference>
<dbReference type="CD-CODE" id="FB4E32DD">
    <property type="entry name" value="Presynaptic clusters and postsynaptic densities"/>
</dbReference>
<dbReference type="ChiTaRS" id="ANK2">
    <property type="organism name" value="human"/>
</dbReference>
<dbReference type="EvolutionaryTrace" id="Q01484"/>
<dbReference type="GenomeRNAi" id="287"/>
<dbReference type="Pharos" id="Q01484">
    <property type="development level" value="Tbio"/>
</dbReference>
<dbReference type="PRO" id="PR:Q01484"/>
<dbReference type="Proteomes" id="UP000005640">
    <property type="component" value="Chromosome 4"/>
</dbReference>
<dbReference type="RNAct" id="Q01484">
    <property type="molecule type" value="protein"/>
</dbReference>
<dbReference type="Bgee" id="ENSG00000145362">
    <property type="expression patterns" value="Expressed in lateral nuclear group of thalamus and 197 other cell types or tissues"/>
</dbReference>
<dbReference type="ExpressionAtlas" id="Q01484">
    <property type="expression patterns" value="baseline and differential"/>
</dbReference>
<dbReference type="GO" id="GO:0031672">
    <property type="term" value="C:A band"/>
    <property type="evidence" value="ECO:0000250"/>
    <property type="project" value="BHF-UCL"/>
</dbReference>
<dbReference type="GO" id="GO:0016324">
    <property type="term" value="C:apical plasma membrane"/>
    <property type="evidence" value="ECO:0007669"/>
    <property type="project" value="UniProtKB-SubCell"/>
</dbReference>
<dbReference type="GO" id="GO:0016323">
    <property type="term" value="C:basolateral plasma membrane"/>
    <property type="evidence" value="ECO:0000314"/>
    <property type="project" value="UniProtKB"/>
</dbReference>
<dbReference type="GO" id="GO:0043034">
    <property type="term" value="C:costamere"/>
    <property type="evidence" value="ECO:0000250"/>
    <property type="project" value="BHF-UCL"/>
</dbReference>
<dbReference type="GO" id="GO:0005856">
    <property type="term" value="C:cytoskeleton"/>
    <property type="evidence" value="ECO:0007669"/>
    <property type="project" value="UniProtKB-SubCell"/>
</dbReference>
<dbReference type="GO" id="GO:0005829">
    <property type="term" value="C:cytosol"/>
    <property type="evidence" value="ECO:0000304"/>
    <property type="project" value="Reactome"/>
</dbReference>
<dbReference type="GO" id="GO:0005769">
    <property type="term" value="C:early endosome"/>
    <property type="evidence" value="ECO:0007669"/>
    <property type="project" value="UniProtKB-SubCell"/>
</dbReference>
<dbReference type="GO" id="GO:0014704">
    <property type="term" value="C:intercalated disc"/>
    <property type="evidence" value="ECO:0000250"/>
    <property type="project" value="BHF-UCL"/>
</dbReference>
<dbReference type="GO" id="GO:0005764">
    <property type="term" value="C:lysosome"/>
    <property type="evidence" value="ECO:0007669"/>
    <property type="project" value="UniProtKB-SubCell"/>
</dbReference>
<dbReference type="GO" id="GO:0031430">
    <property type="term" value="C:M band"/>
    <property type="evidence" value="ECO:0000250"/>
    <property type="project" value="BHF-UCL"/>
</dbReference>
<dbReference type="GO" id="GO:0005739">
    <property type="term" value="C:mitochondrion"/>
    <property type="evidence" value="ECO:0007669"/>
    <property type="project" value="UniProtKB-SubCell"/>
</dbReference>
<dbReference type="GO" id="GO:0043005">
    <property type="term" value="C:neuron projection"/>
    <property type="evidence" value="ECO:0000318"/>
    <property type="project" value="GO_Central"/>
</dbReference>
<dbReference type="GO" id="GO:0005886">
    <property type="term" value="C:plasma membrane"/>
    <property type="evidence" value="ECO:0000250"/>
    <property type="project" value="BHF-UCL"/>
</dbReference>
<dbReference type="GO" id="GO:0045211">
    <property type="term" value="C:postsynaptic membrane"/>
    <property type="evidence" value="ECO:0007669"/>
    <property type="project" value="UniProtKB-SubCell"/>
</dbReference>
<dbReference type="GO" id="GO:0055037">
    <property type="term" value="C:recycling endosome"/>
    <property type="evidence" value="ECO:0007669"/>
    <property type="project" value="UniProtKB-SubCell"/>
</dbReference>
<dbReference type="GO" id="GO:0042383">
    <property type="term" value="C:sarcolemma"/>
    <property type="evidence" value="ECO:0000250"/>
    <property type="project" value="BHF-UCL"/>
</dbReference>
<dbReference type="GO" id="GO:0030315">
    <property type="term" value="C:T-tubule"/>
    <property type="evidence" value="ECO:0000250"/>
    <property type="project" value="BHF-UCL"/>
</dbReference>
<dbReference type="GO" id="GO:0030018">
    <property type="term" value="C:Z disc"/>
    <property type="evidence" value="ECO:0000250"/>
    <property type="project" value="BHF-UCL"/>
</dbReference>
<dbReference type="GO" id="GO:0051117">
    <property type="term" value="F:ATPase binding"/>
    <property type="evidence" value="ECO:0000250"/>
    <property type="project" value="BHF-UCL"/>
</dbReference>
<dbReference type="GO" id="GO:0099103">
    <property type="term" value="F:channel activator activity"/>
    <property type="evidence" value="ECO:0000250"/>
    <property type="project" value="BHF-UCL"/>
</dbReference>
<dbReference type="GO" id="GO:0008093">
    <property type="term" value="F:cytoskeletal anchor activity"/>
    <property type="evidence" value="ECO:0000318"/>
    <property type="project" value="GO_Central"/>
</dbReference>
<dbReference type="GO" id="GO:0019899">
    <property type="term" value="F:enzyme binding"/>
    <property type="evidence" value="ECO:0000353"/>
    <property type="project" value="UniProtKB"/>
</dbReference>
<dbReference type="GO" id="GO:0140031">
    <property type="term" value="F:phosphorylation-dependent protein binding"/>
    <property type="evidence" value="ECO:0000353"/>
    <property type="project" value="UniProtKB"/>
</dbReference>
<dbReference type="GO" id="GO:0099104">
    <property type="term" value="F:potassium channel activator activity"/>
    <property type="evidence" value="ECO:0000250"/>
    <property type="project" value="BHF-UCL"/>
</dbReference>
<dbReference type="GO" id="GO:0019901">
    <property type="term" value="F:protein kinase binding"/>
    <property type="evidence" value="ECO:0000353"/>
    <property type="project" value="BHF-UCL"/>
</dbReference>
<dbReference type="GO" id="GO:0030674">
    <property type="term" value="F:protein-macromolecule adaptor activity"/>
    <property type="evidence" value="ECO:0000250"/>
    <property type="project" value="BHF-UCL"/>
</dbReference>
<dbReference type="GO" id="GO:0030507">
    <property type="term" value="F:spectrin binding"/>
    <property type="evidence" value="ECO:0000353"/>
    <property type="project" value="BHF-UCL"/>
</dbReference>
<dbReference type="GO" id="GO:0005200">
    <property type="term" value="F:structural constituent of cytoskeleton"/>
    <property type="evidence" value="ECO:0007669"/>
    <property type="project" value="Ensembl"/>
</dbReference>
<dbReference type="GO" id="GO:0044325">
    <property type="term" value="F:transmembrane transporter binding"/>
    <property type="evidence" value="ECO:0000353"/>
    <property type="project" value="BHF-UCL"/>
</dbReference>
<dbReference type="GO" id="GO:0086014">
    <property type="term" value="P:atrial cardiac muscle cell action potential"/>
    <property type="evidence" value="ECO:0000315"/>
    <property type="project" value="BHF-UCL"/>
</dbReference>
<dbReference type="GO" id="GO:0086066">
    <property type="term" value="P:atrial cardiac muscle cell to AV node cell communication"/>
    <property type="evidence" value="ECO:0000250"/>
    <property type="project" value="BHF-UCL"/>
</dbReference>
<dbReference type="GO" id="GO:0003283">
    <property type="term" value="P:atrial septum development"/>
    <property type="evidence" value="ECO:0000315"/>
    <property type="project" value="BHF-UCL"/>
</dbReference>
<dbReference type="GO" id="GO:0006897">
    <property type="term" value="P:endocytosis"/>
    <property type="evidence" value="ECO:0007669"/>
    <property type="project" value="UniProtKB-KW"/>
</dbReference>
<dbReference type="GO" id="GO:0006874">
    <property type="term" value="P:intracellular calcium ion homeostasis"/>
    <property type="evidence" value="ECO:0000250"/>
    <property type="project" value="BHF-UCL"/>
</dbReference>
<dbReference type="GO" id="GO:0086046">
    <property type="term" value="P:membrane depolarization during SA node cell action potential"/>
    <property type="evidence" value="ECO:0000304"/>
    <property type="project" value="BHF-UCL"/>
</dbReference>
<dbReference type="GO" id="GO:0030913">
    <property type="term" value="P:paranodal junction assembly"/>
    <property type="evidence" value="ECO:0007669"/>
    <property type="project" value="Ensembl"/>
</dbReference>
<dbReference type="GO" id="GO:0051928">
    <property type="term" value="P:positive regulation of calcium ion transport"/>
    <property type="evidence" value="ECO:0000250"/>
    <property type="project" value="BHF-UCL"/>
</dbReference>
<dbReference type="GO" id="GO:0010628">
    <property type="term" value="P:positive regulation of gene expression"/>
    <property type="evidence" value="ECO:0000316"/>
    <property type="project" value="BHF-UCL"/>
</dbReference>
<dbReference type="GO" id="GO:1903288">
    <property type="term" value="P:positive regulation of potassium ion import across plasma membrane"/>
    <property type="evidence" value="ECO:0000315"/>
    <property type="project" value="BHF-UCL"/>
</dbReference>
<dbReference type="GO" id="GO:0008104">
    <property type="term" value="P:protein localization"/>
    <property type="evidence" value="ECO:0000316"/>
    <property type="project" value="BHF-UCL"/>
</dbReference>
<dbReference type="GO" id="GO:0034394">
    <property type="term" value="P:protein localization to cell surface"/>
    <property type="evidence" value="ECO:0000250"/>
    <property type="project" value="BHF-UCL"/>
</dbReference>
<dbReference type="GO" id="GO:0070972">
    <property type="term" value="P:protein localization to endoplasmic reticulum"/>
    <property type="evidence" value="ECO:0000316"/>
    <property type="project" value="BHF-UCL"/>
</dbReference>
<dbReference type="GO" id="GO:0036309">
    <property type="term" value="P:protein localization to M-band"/>
    <property type="evidence" value="ECO:0000250"/>
    <property type="project" value="BHF-UCL"/>
</dbReference>
<dbReference type="GO" id="GO:0033365">
    <property type="term" value="P:protein localization to organelle"/>
    <property type="evidence" value="ECO:0000316"/>
    <property type="project" value="BHF-UCL"/>
</dbReference>
<dbReference type="GO" id="GO:0072659">
    <property type="term" value="P:protein localization to plasma membrane"/>
    <property type="evidence" value="ECO:0000315"/>
    <property type="project" value="BHF-UCL"/>
</dbReference>
<dbReference type="GO" id="GO:0036371">
    <property type="term" value="P:protein localization to T-tubule"/>
    <property type="evidence" value="ECO:0000250"/>
    <property type="project" value="BHF-UCL"/>
</dbReference>
<dbReference type="GO" id="GO:0050821">
    <property type="term" value="P:protein stabilization"/>
    <property type="evidence" value="ECO:0000250"/>
    <property type="project" value="BHF-UCL"/>
</dbReference>
<dbReference type="GO" id="GO:0015031">
    <property type="term" value="P:protein transport"/>
    <property type="evidence" value="ECO:0007669"/>
    <property type="project" value="UniProtKB-KW"/>
</dbReference>
<dbReference type="GO" id="GO:0098910">
    <property type="term" value="P:regulation of atrial cardiac muscle cell action potential"/>
    <property type="evidence" value="ECO:0000315"/>
    <property type="project" value="BHF-UCL"/>
</dbReference>
<dbReference type="GO" id="GO:0051924">
    <property type="term" value="P:regulation of calcium ion transport"/>
    <property type="evidence" value="ECO:0000316"/>
    <property type="project" value="BHF-UCL"/>
</dbReference>
<dbReference type="GO" id="GO:0086004">
    <property type="term" value="P:regulation of cardiac muscle cell contraction"/>
    <property type="evidence" value="ECO:0000316"/>
    <property type="project" value="BHF-UCL"/>
</dbReference>
<dbReference type="GO" id="GO:0055117">
    <property type="term" value="P:regulation of cardiac muscle contraction"/>
    <property type="evidence" value="ECO:0000315"/>
    <property type="project" value="BHF-UCL"/>
</dbReference>
<dbReference type="GO" id="GO:0010882">
    <property type="term" value="P:regulation of cardiac muscle contraction by calcium ion signaling"/>
    <property type="evidence" value="ECO:0000315"/>
    <property type="project" value="BHF-UCL"/>
</dbReference>
<dbReference type="GO" id="GO:0010881">
    <property type="term" value="P:regulation of cardiac muscle contraction by regulation of the release of sequestered calcium ion"/>
    <property type="evidence" value="ECO:0000316"/>
    <property type="project" value="BHF-UCL"/>
</dbReference>
<dbReference type="GO" id="GO:0002027">
    <property type="term" value="P:regulation of heart rate"/>
    <property type="evidence" value="ECO:0000315"/>
    <property type="project" value="BHF-UCL"/>
</dbReference>
<dbReference type="GO" id="GO:0086091">
    <property type="term" value="P:regulation of heart rate by cardiac conduction"/>
    <property type="evidence" value="ECO:0000315"/>
    <property type="project" value="BHF-UCL"/>
</dbReference>
<dbReference type="GO" id="GO:0031647">
    <property type="term" value="P:regulation of protein stability"/>
    <property type="evidence" value="ECO:0000305"/>
    <property type="project" value="BHF-UCL"/>
</dbReference>
<dbReference type="GO" id="GO:0051279">
    <property type="term" value="P:regulation of release of sequestered calcium ion into cytosol"/>
    <property type="evidence" value="ECO:0000316"/>
    <property type="project" value="BHF-UCL"/>
</dbReference>
<dbReference type="GO" id="GO:0098907">
    <property type="term" value="P:regulation of SA node cell action potential"/>
    <property type="evidence" value="ECO:0000315"/>
    <property type="project" value="BHF-UCL"/>
</dbReference>
<dbReference type="GO" id="GO:0060307">
    <property type="term" value="P:regulation of ventricular cardiac muscle cell membrane repolarization"/>
    <property type="evidence" value="ECO:0000315"/>
    <property type="project" value="BHF-UCL"/>
</dbReference>
<dbReference type="GO" id="GO:0051597">
    <property type="term" value="P:response to methylmercury"/>
    <property type="evidence" value="ECO:0007669"/>
    <property type="project" value="Ensembl"/>
</dbReference>
<dbReference type="GO" id="GO:0086015">
    <property type="term" value="P:SA node cell action potential"/>
    <property type="evidence" value="ECO:0000250"/>
    <property type="project" value="BHF-UCL"/>
</dbReference>
<dbReference type="GO" id="GO:0086070">
    <property type="term" value="P:SA node cell to atrial cardiac muscle cell communication"/>
    <property type="evidence" value="ECO:0000315"/>
    <property type="project" value="BHF-UCL"/>
</dbReference>
<dbReference type="GO" id="GO:0070296">
    <property type="term" value="P:sarcoplasmic reticulum calcium ion transport"/>
    <property type="evidence" value="ECO:0000304"/>
    <property type="project" value="BHF-UCL"/>
</dbReference>
<dbReference type="GO" id="GO:0033292">
    <property type="term" value="P:T-tubule organization"/>
    <property type="evidence" value="ECO:0000250"/>
    <property type="project" value="BHF-UCL"/>
</dbReference>
<dbReference type="GO" id="GO:0086005">
    <property type="term" value="P:ventricular cardiac muscle cell action potential"/>
    <property type="evidence" value="ECO:0000315"/>
    <property type="project" value="BHF-UCL"/>
</dbReference>
<dbReference type="CDD" id="cd08804">
    <property type="entry name" value="Death_ank2"/>
    <property type="match status" value="1"/>
</dbReference>
<dbReference type="FunFam" id="1.25.40.20:FF:000003">
    <property type="entry name" value="Ankyrin, isoform B"/>
    <property type="match status" value="1"/>
</dbReference>
<dbReference type="FunFam" id="1.25.40.20:FF:000001">
    <property type="entry name" value="Ankyrin-2 isoform 2"/>
    <property type="match status" value="1"/>
</dbReference>
<dbReference type="FunFam" id="1.25.40.20:FF:000002">
    <property type="entry name" value="Ankyrin-2 isoform 2"/>
    <property type="match status" value="1"/>
</dbReference>
<dbReference type="FunFam" id="2.60.220.30:FF:000005">
    <property type="entry name" value="Ankyrin-2 isoform 2"/>
    <property type="match status" value="1"/>
</dbReference>
<dbReference type="FunFam" id="2.60.220.30:FF:000007">
    <property type="entry name" value="Ankyrin-2 isoform 2"/>
    <property type="match status" value="1"/>
</dbReference>
<dbReference type="FunFam" id="1.10.533.10:FF:000002">
    <property type="entry name" value="Ankyrin-3 isoform 2"/>
    <property type="match status" value="1"/>
</dbReference>
<dbReference type="FunFam" id="2.60.220.30:FF:000001">
    <property type="entry name" value="Ankyrin-3 isoform 2"/>
    <property type="match status" value="1"/>
</dbReference>
<dbReference type="FunFam" id="2.60.40.2660:FF:000001">
    <property type="entry name" value="Ankyrin-3 isoform 2"/>
    <property type="match status" value="1"/>
</dbReference>
<dbReference type="Gene3D" id="2.60.220.30">
    <property type="match status" value="3"/>
</dbReference>
<dbReference type="Gene3D" id="2.60.40.2660">
    <property type="match status" value="1"/>
</dbReference>
<dbReference type="Gene3D" id="1.25.40.20">
    <property type="entry name" value="Ankyrin repeat-containing domain"/>
    <property type="match status" value="3"/>
</dbReference>
<dbReference type="Gene3D" id="1.10.533.10">
    <property type="entry name" value="Death Domain, Fas"/>
    <property type="match status" value="1"/>
</dbReference>
<dbReference type="InterPro" id="IPR002110">
    <property type="entry name" value="Ankyrin_rpt"/>
</dbReference>
<dbReference type="InterPro" id="IPR036770">
    <property type="entry name" value="Ankyrin_rpt-contain_sf"/>
</dbReference>
<dbReference type="InterPro" id="IPR040745">
    <property type="entry name" value="Ankyrin_UPA"/>
</dbReference>
<dbReference type="InterPro" id="IPR011029">
    <property type="entry name" value="DEATH-like_dom_sf"/>
</dbReference>
<dbReference type="InterPro" id="IPR000488">
    <property type="entry name" value="Death_dom"/>
</dbReference>
<dbReference type="InterPro" id="IPR051165">
    <property type="entry name" value="Multifunctional_ANK_Repeat"/>
</dbReference>
<dbReference type="InterPro" id="IPR000906">
    <property type="entry name" value="ZU5_dom"/>
</dbReference>
<dbReference type="PANTHER" id="PTHR24123">
    <property type="entry name" value="ANKYRIN REPEAT-CONTAINING"/>
    <property type="match status" value="1"/>
</dbReference>
<dbReference type="PANTHER" id="PTHR24123:SF49">
    <property type="entry name" value="ANKYRIN-2-LIKE ISOFORM X1"/>
    <property type="match status" value="1"/>
</dbReference>
<dbReference type="Pfam" id="PF00023">
    <property type="entry name" value="Ank"/>
    <property type="match status" value="3"/>
</dbReference>
<dbReference type="Pfam" id="PF12796">
    <property type="entry name" value="Ank_2"/>
    <property type="match status" value="6"/>
</dbReference>
<dbReference type="Pfam" id="PF13637">
    <property type="entry name" value="Ank_4"/>
    <property type="match status" value="2"/>
</dbReference>
<dbReference type="Pfam" id="PF00531">
    <property type="entry name" value="Death"/>
    <property type="match status" value="1"/>
</dbReference>
<dbReference type="Pfam" id="PF17809">
    <property type="entry name" value="UPA_2"/>
    <property type="match status" value="1"/>
</dbReference>
<dbReference type="Pfam" id="PF00791">
    <property type="entry name" value="ZU5"/>
    <property type="match status" value="3"/>
</dbReference>
<dbReference type="PRINTS" id="PR01415">
    <property type="entry name" value="ANKYRIN"/>
</dbReference>
<dbReference type="SMART" id="SM00248">
    <property type="entry name" value="ANK"/>
    <property type="match status" value="23"/>
</dbReference>
<dbReference type="SMART" id="SM00005">
    <property type="entry name" value="DEATH"/>
    <property type="match status" value="1"/>
</dbReference>
<dbReference type="SMART" id="SM00218">
    <property type="entry name" value="ZU5"/>
    <property type="match status" value="1"/>
</dbReference>
<dbReference type="SUPFAM" id="SSF48403">
    <property type="entry name" value="Ankyrin repeat"/>
    <property type="match status" value="3"/>
</dbReference>
<dbReference type="SUPFAM" id="SSF47986">
    <property type="entry name" value="DEATH domain"/>
    <property type="match status" value="1"/>
</dbReference>
<dbReference type="PROSITE" id="PS50297">
    <property type="entry name" value="ANK_REP_REGION"/>
    <property type="match status" value="1"/>
</dbReference>
<dbReference type="PROSITE" id="PS50088">
    <property type="entry name" value="ANK_REPEAT"/>
    <property type="match status" value="20"/>
</dbReference>
<dbReference type="PROSITE" id="PS50017">
    <property type="entry name" value="DEATH_DOMAIN"/>
    <property type="match status" value="1"/>
</dbReference>
<dbReference type="PROSITE" id="PS51145">
    <property type="entry name" value="ZU5"/>
    <property type="match status" value="2"/>
</dbReference>
<accession>Q01484</accession>
<accession>Q01485</accession>
<accession>Q08AC7</accession>
<accession>Q08AC8</accession>
<accession>Q7Z3L5</accession>
<name>ANK2_HUMAN</name>